<evidence type="ECO:0000255" key="1">
    <source>
        <dbReference type="PROSITE-ProRule" id="PRU00037"/>
    </source>
</evidence>
<evidence type="ECO:0000256" key="2">
    <source>
        <dbReference type="SAM" id="MobiDB-lite"/>
    </source>
</evidence>
<evidence type="ECO:0000269" key="3">
    <source>
    </source>
</evidence>
<evidence type="ECO:0000269" key="4">
    <source>
    </source>
</evidence>
<evidence type="ECO:0000269" key="5">
    <source>
    </source>
</evidence>
<evidence type="ECO:0000269" key="6">
    <source>
    </source>
</evidence>
<evidence type="ECO:0000269" key="7">
    <source>
    </source>
</evidence>
<evidence type="ECO:0000269" key="8">
    <source>
    </source>
</evidence>
<evidence type="ECO:0000269" key="9">
    <source>
    </source>
</evidence>
<evidence type="ECO:0000269" key="10">
    <source>
    </source>
</evidence>
<evidence type="ECO:0000269" key="11">
    <source>
    </source>
</evidence>
<evidence type="ECO:0000269" key="12">
    <source>
    </source>
</evidence>
<evidence type="ECO:0000269" key="13">
    <source>
    </source>
</evidence>
<evidence type="ECO:0000269" key="14">
    <source>
    </source>
</evidence>
<evidence type="ECO:0000269" key="15">
    <source>
    </source>
</evidence>
<evidence type="ECO:0000269" key="16">
    <source>
    </source>
</evidence>
<evidence type="ECO:0000269" key="17">
    <source>
    </source>
</evidence>
<evidence type="ECO:0000269" key="18">
    <source>
    </source>
</evidence>
<evidence type="ECO:0000269" key="19">
    <source>
    </source>
</evidence>
<evidence type="ECO:0000269" key="20">
    <source>
    </source>
</evidence>
<evidence type="ECO:0000269" key="21">
    <source>
    </source>
</evidence>
<evidence type="ECO:0000269" key="22">
    <source>
    </source>
</evidence>
<evidence type="ECO:0000269" key="23">
    <source>
    </source>
</evidence>
<evidence type="ECO:0000303" key="24">
    <source>
    </source>
</evidence>
<evidence type="ECO:0000303" key="25">
    <source>
    </source>
</evidence>
<evidence type="ECO:0000303" key="26">
    <source>
    </source>
</evidence>
<evidence type="ECO:0000303" key="27">
    <source>
    </source>
</evidence>
<evidence type="ECO:0000303" key="28">
    <source>
    </source>
</evidence>
<evidence type="ECO:0000303" key="29">
    <source>
    </source>
</evidence>
<evidence type="ECO:0000303" key="30">
    <source ref="8"/>
</evidence>
<evidence type="ECO:0000305" key="31"/>
<evidence type="ECO:0000312" key="32">
    <source>
        <dbReference type="FlyBase" id="FBgn0002781"/>
    </source>
</evidence>
<feature type="chain" id="PRO_0000096505" description="Modifier of mdg4">
    <location>
        <begin position="1"/>
        <end position="610"/>
    </location>
</feature>
<feature type="domain" description="BTB" evidence="1">
    <location>
        <begin position="32"/>
        <end position="98"/>
    </location>
</feature>
<feature type="zinc finger region" description="FLYWCH-type">
    <location>
        <begin position="452"/>
        <end position="512"/>
    </location>
</feature>
<feature type="region of interest" description="Interaction with Chi">
    <location>
        <begin position="1"/>
        <end position="308"/>
    </location>
</feature>
<feature type="region of interest" description="Self-association">
    <location>
        <begin position="1"/>
        <end position="160"/>
    </location>
</feature>
<feature type="region of interest" description="Disordered" evidence="2">
    <location>
        <begin position="115"/>
        <end position="156"/>
    </location>
</feature>
<feature type="region of interest" description="Disordered" evidence="2">
    <location>
        <begin position="219"/>
        <end position="259"/>
    </location>
</feature>
<feature type="region of interest" description="Disordered" evidence="2">
    <location>
        <begin position="311"/>
        <end position="339"/>
    </location>
</feature>
<feature type="region of interest" description="Disordered" evidence="2">
    <location>
        <begin position="386"/>
        <end position="432"/>
    </location>
</feature>
<feature type="region of interest" description="Interaction with su(Hw)">
    <location>
        <begin position="551"/>
        <end position="610"/>
    </location>
</feature>
<feature type="region of interest" description="Disordered" evidence="2">
    <location>
        <begin position="567"/>
        <end position="595"/>
    </location>
</feature>
<feature type="compositionally biased region" description="Pro residues" evidence="2">
    <location>
        <begin position="122"/>
        <end position="135"/>
    </location>
</feature>
<feature type="compositionally biased region" description="Low complexity" evidence="2">
    <location>
        <begin position="136"/>
        <end position="156"/>
    </location>
</feature>
<feature type="compositionally biased region" description="Polar residues" evidence="2">
    <location>
        <begin position="222"/>
        <end position="238"/>
    </location>
</feature>
<feature type="compositionally biased region" description="Basic and acidic residues" evidence="2">
    <location>
        <begin position="312"/>
        <end position="325"/>
    </location>
</feature>
<feature type="compositionally biased region" description="Polar residues" evidence="2">
    <location>
        <begin position="386"/>
        <end position="400"/>
    </location>
</feature>
<feature type="compositionally biased region" description="Low complexity" evidence="2">
    <location>
        <begin position="401"/>
        <end position="410"/>
    </location>
</feature>
<feature type="compositionally biased region" description="Basic and acidic residues" evidence="2">
    <location>
        <begin position="422"/>
        <end position="432"/>
    </location>
</feature>
<feature type="compositionally biased region" description="Acidic residues" evidence="2">
    <location>
        <begin position="567"/>
        <end position="577"/>
    </location>
</feature>
<feature type="compositionally biased region" description="Basic and acidic residues" evidence="2">
    <location>
        <begin position="578"/>
        <end position="595"/>
    </location>
</feature>
<feature type="modified residue" description="Phosphoserine" evidence="16">
    <location>
        <position position="230"/>
    </location>
</feature>
<feature type="splice variant" id="VSP_010283" description="In isoform mod1.9." evidence="27">
    <location>
        <begin position="360"/>
        <end position="449"/>
    </location>
</feature>
<feature type="splice variant" id="VSP_050724" description="In isoform 53.1." evidence="25">
    <original>AATSASATKIPPRKRGRPKTKVEDQTPKPKLLEKLQAATLNEEASEPAVYASTTKGGVKLIFNGHLFKFSFRKADYSVFQCCYREHGEECKVRVVCDQKRVFPYEGEHVHFMQASDKSCLPSQFMPGESGVISSLSPSKELLMKNTTKLEEADDKEDEDFEEFEIQEIDEIELDEPEKTPAKEEEVDPNDFREKIKRRLQKALQNKKK</original>
    <variation>GDATQFFFTKGQRESVKLNYCGHSYVKFMENGRGTKWICATRSTTKCRARIRTTKNNYLEVLYASHNHGFPPQKKDRGRASQRM</variation>
    <location>
        <begin position="403"/>
        <end position="610"/>
    </location>
</feature>
<feature type="splice variant" id="VSP_010287" description="In isoform 54.7." evidence="26">
    <original>AATSASATKIPPRKRGRPKTKVEDQTPKPKLLEKLQAATLNEEASEPAVYASTTKGGVKLIFNGHLFKFSFRKADYSVFQCCYREHGEECKVRVVCDQKRVFPYEGEHVHFMQASDKSCLPSQFMPGESGVISSLSPSKELLMKNTTKLEEADDKEDEDFEEFEIQEIDEIELDEPEKTPAKEEEVDPNDFREKIKRRLQKALQNKKK</original>
    <variation>EQEDDFKLHLPLLVTRRKKTPGGSRKQSFDHLEVSFTRSNRGNNLLTIDGKPFTLNRRIKDVCYWECVKLRCKYIKCSARVVTKSNRISALSGLHNHP</variation>
    <location>
        <begin position="403"/>
        <end position="610"/>
    </location>
</feature>
<feature type="splice variant" id="VSP_050725" description="In isoform 55.6." evidence="25 30">
    <original>AATSASATKIPPRKRGRPKTKVEDQTPKPKLLEKLQAATLNEEASEPAVYASTTKGGVKLIFNGHLFKFSFRKADYSVFQCCYREHGEECKVRVVCDQKRVFPYEGEHVHFMQASDKSCLPSQFMPGESGVISSLSPSKELLMKNTTKLEEADDKEDEDFEEFEIQEIDEIELDEPEKTPAKEEEVDPNDFREKIKRRLQKALQNKKK</original>
    <variation>GHLSTLRHLPVEAIFDADGKQMDFIPNIRVIRSQRKTIKLMFKKYAYSKTNEHDTTTYWHCRSRRNGRPACKARFSTKKLKNGSYKVYLTQPEHNHPPKKRRL</variation>
    <location>
        <begin position="403"/>
        <end position="610"/>
    </location>
</feature>
<feature type="splice variant" id="VSP_010288" description="In isoform 59.0." evidence="25">
    <original>AATSASATKIPPRKRGRPKTKVEDQTPKPKLLEKLQAATLNEEASEPAVYASTTKGGVKLIFNGHLFKFSFRKADYSVFQCCYREHGEECKVRVVCDQKRVFPYEGEHVHFMQASDKSCLPSQFMPGESGVISSLSPSKELLMKNTTKLEEADDKEDEDFEEFEIQEIDEIELDEPEKTPAKEEEVDPNDFREKIKRRLQKALQNKKK</original>
    <variation>VTQHVRNCGPQMFLISRKGGTLLTINNFVYRSNLKFFGKSNNILYWECVQNRSVKCRSRLKTIGDDLYVTNDVHNHMGDNKRIEAAKAAGMLIHKKLSSLTAADKIQGSWKMDTEGNPDHLPKM</variation>
    <location>
        <begin position="403"/>
        <end position="610"/>
    </location>
</feature>
<feature type="splice variant" id="VSP_050701" description="In isoform 62.3." evidence="25">
    <original>AATSASATKIPPRKRGRPKTKVEDQTPKPKLLEKLQAATLNEEASEPAVYASTTKGGVKLIFNGHLFKFSFRKADYSVFQCCYREHGEECKVRVVCDQKRVFPYEGEHVHFMQASDKSCLPSQFMPGESGVISSLSPSKELLMKNTTKLEEADDKEDEDFEEFEIQEIDEIELDEPEKTPAKEEEVDPNDFREKIKRRLQKALQNKKK</original>
    <variation>ESSVAIYSATSRGRMQLIYGGQPFIFEKTLKLSSGEEKRFWRCNQWWNQKCRSRVFTINDVVCPLNRFHTHEEIVRRKKRVRRVPPVETIAKVVATTPRHPQHQQTTQQQQEIQLTSDAIAGAILDDESPATIDVSELGMHLKYEEIVADVTGIVGGTRVVSRRK</variation>
    <location>
        <begin position="403"/>
        <end position="610"/>
    </location>
</feature>
<feature type="splice variant" id="VSP_050713" description="In isoform A." evidence="26">
    <original>AATSASATKIPPRKRGRPKTKVEDQTPKPKLLEKLQAATLNEEASEPAVYASTTKGGVKLIFNGHLFKFSFRKADYSVFQCCYREHGEECKVRVVCDQKRVFPYEGEHVHFMQASDKSCLPSQFMPGESGVISSLSPSKELLMKNTTKLEEADDKEDEDFEEFEIQEIDEIELDEPEKTPAKEEEVDPNDFREKIKRRLQKALQNKKK</original>
    <variation>EKQFEYVVSQKGHVLLLHKKFPFIREKCINGKTYWRCTQYTTKTKCHGRLHVLNGKIVHIKTHNHSPLDQERKQYMKLQLNNV</variation>
    <location>
        <begin position="403"/>
        <end position="610"/>
    </location>
</feature>
<feature type="splice variant" id="VSP_034704" description="In isoform AA." evidence="30">
    <original>AATSASATKIPPRKRGRPKTKVEDQTPKPKLLEKLQAATLNEEASEPAVYASTTKGGVKLIFNGHLFKFSFRKADYSVFQCCYREHGEECKVRVVCDQKRVFPYEGEHVHFMQASDKSCLPSQFMPGESGVISSLSPSKELLMKNTTKLEEADDKEDEDFEEFEIQEIDEIELDEPEKTPAKEEEVDPNDFREKIKRRLQKALQNKKK</original>
    <variation>VLTYDDRGKLVHEGFTFSCYSRNPGKCLAFWRCSMYKKMHCTSALTTHIKSIKSIRGFHNHKPPERLKTFVPRVLDCPPRPHKEDY</variation>
    <location>
        <begin position="403"/>
        <end position="610"/>
    </location>
</feature>
<feature type="splice variant" id="VSP_034705" description="In isoform AB." evidence="31">
    <original>AATSASATKIPPRKRGRPKTKVEDQTPKPKLLEKLQAATLNEEASEPAVYASTTKGGVKLIFNGHLFKFSFRKADYSVFQCCYREHGEECKVRVVCDQKRVFPYEGEHVHFMQASDKSCLPSQFMPGESGVISSLSPSKELLMKNTTKLEEADDKEDEDFEEFEIQEIDEIELDEPEKTPAKEEEVDPNDFREKIKRRLQKALQNKKK</original>
    <variation>GVIQSLKALFEGKTTGASIQYTTTQRGRVMLVYEGYRYVVNRQSLKNVFWRCSRYVKHSCRATLVTSKVQEVTLRIAGTPHTHAPEVSSMDLTTDLLDEFPELQ</variation>
    <location>
        <begin position="403"/>
        <end position="610"/>
    </location>
</feature>
<feature type="splice variant" id="VSP_010284" description="In isoform B." evidence="25">
    <original>AATSASATKIPPRKRGRPKTKVEDQTPKPKLLEKLQAATLNEEASEPAVYASTTKGGVKLIFNGHLFKFSFRKADYSVFQCCYREHGEECKVRVVCDQKRVFPYEGEHVHFMQASDKSCLPSQFMPGESGVISSLSPSKELLMKNTTKLEEADDKEDEDFEEFEIQEIDEIELDEPEKTPAKEEEVDPNDFREKIKRRLQKALQNKKK</original>
    <variation>VTFDVLTDPIVKPDQHQLMKRVRLSKSMEGVHYVRTPAGNVVLHCGEHRYLRNAAYKDKVYWKCSKWRKQCRSRVITHILPNGQSRYAVSGVHNHP</variation>
    <location>
        <begin position="403"/>
        <end position="610"/>
    </location>
</feature>
<feature type="splice variant" id="VSP_050714" description="In isoform C." evidence="25 28">
    <original>AATSASATKIPPRKRGRPKTKVEDQTPKPKLLEKLQAATLNEEASEPAVYASTTKGGVKLIFNGHLFKFSFRKADYSVFQCCYREHGEECKVRVVCDQKRVFPYEGEHVHFMQASDKSCLPSQFMPGESGVISSLSPSKELLMKNTTKLEEADDKEDEDFEEFEIQEIDEIELDEPEKTPAKEEEVDPNDFREKIKRRLQKALQNKKK</original>
    <variation>DGPSKDTAIPKPAEHPRKPVTDSVQKSPRDADAIPLFDGSRVFVSKVALAKAYIPMPMIYTCRVMDLVIGKDKLVRIAQHEETTDKDLIQDIITHVCKVFALRGNQLTPSAVQEFIDHKLSTLKLMPIKEGK</variation>
    <location>
        <begin position="403"/>
        <end position="610"/>
    </location>
</feature>
<feature type="splice variant" id="VSP_010285" description="In isoform D." evidence="25">
    <original>AATSASATKIPPRKRGRPKTKVEDQTPKPKLLEKLQAATLNEEASEPAVYASTTKGGVKLIFNGHLFKFSFRKADYSVFQCCYREHGEECKVRVVCDQKRVFPYEGEHVHFMQASDKSCLPSQFMPGESGVISSLSPSKELLMKNTTKLEEADDKEDEDFEEFEIQEIDEIELDEPEKTPAKEEEVDPNDFREKIKRRLQKALQNKKK</original>
    <variation>EFDYGHGQYRGNNPQIQFSVSKRGGQLLWLDGMKFFRNNINRTNLYWRCHWYYRHTKCPVLICMSKTNSNDFRQIHDHCHIRPKRKENSGTGDGPKIRTPVVSNVRSLPQSMAHMFDM</variation>
    <location>
        <begin position="403"/>
        <end position="610"/>
    </location>
</feature>
<feature type="splice variant" id="VSP_050699" description="In isoform E." evidence="25 30">
    <original>AATSASATKIPPRKRGRPKTKVEDQTPKPKLLEKLQAATLNEEASEPAVYASTTKGGVKLIFNGHLFKFSFRKADYSVFQCCYREHGEECKVRVVCDQKRVFPYEGEHVHFMQASDKSCLPSQFMPGESGVISSLSPSKELLMKNTTKLEEADDKEDEDFEEFEIQEIDEIELDEPEKTPAKEEEVDPNDFREKIKRRLQKALQNKKK</original>
    <variation>VKIKMEPSPTPGHSSDAAVAALAVTYLSDEESFRKPFTLPKLLDGKFYKNIQPNQKTPGAIQATCTTCHGLISGTTKSTGNFLSHIKRRHKELLPLCQLYCQAKANGTVPAVKSSPPNPNHVLTSATPTPAMEMMTQVAQMPPTAAYATGPTHLGMPVTVPVPVSMSLAMPISLPHVQTPQMMALMQQHQAHGAVFISKDY</variation>
    <location>
        <begin position="403"/>
        <end position="610"/>
    </location>
</feature>
<feature type="splice variant" id="VSP_050704" description="In isoform F." evidence="25">
    <original>AATSASATKIPPRKRGRPKTKVEDQTPKPKLLEKLQAATLNEEASEPAVYASTTKGGVKLIFNGHLFKFSFRKADYSVFQCCYREHGEECKVRVVCDQKRVFPYEGEHVHFMQASDKSCLPSQFMPGESGVISSLSPSKELLMKNTTKLEEADDKEDEDFEEFEIQEIDEIELDEPEKTPAKEEEVDPNDFREKIKRRLQKALQNKKK</original>
    <variation>VVLANDEVPNPEDVLVFFTQSLRGRPAIMANGIRFLIMSENKKKILWRCSSMATKKLKCPARITMLKETPPKFIINKAEHLHAELKRNKYSSSKAQTLRDPHQMATKLDCEMEGAGGVSFDLHEEELNELTHDV</variation>
    <location>
        <begin position="403"/>
        <end position="610"/>
    </location>
</feature>
<feature type="splice variant" id="VSP_050715" description="In isoform G." evidence="25">
    <original>AATSASATKIPPRKRGRPKTKVEDQTPKPKLLEKLQAATLNEEASEPAVYASTTKGGVKLIFNGHLFKFSFRKADYSVFQCCYREHGEECKVRVVCDQKRVFPYEGEHVHFMQASDKSCLPSQFMPGESGVISSLSPSKELLMKNTTKLEEADDKEDEDFEEFEIQEIDEIELDEPEKTPAKEEEVDPNDFREKIKRRLQKALQNKKK</original>
    <variation>ELAVFGTGQRGRTVLLFQNEKFVKNRCSASRTYWICSKKDVTVCRARVVTAVDKNSQERIIKCTYEHDHSRKFPSNNVNLPVLIKREKALSLDAS</variation>
    <location>
        <begin position="403"/>
        <end position="610"/>
    </location>
</feature>
<feature type="splice variant" id="VSP_050716" description="In isoform H." evidence="25 29">
    <original>AATSASATKIPPRKRGRPKTKVEDQTPKPKLLEKLQAATLNEEASEPAVYASTTKGGVKLIFNGHLFKFSFRKADYSVFQCCYREHGEECKVRVVCDQKRVFPYEGEHVHFMQASDKSCLPSQFMPGESGVISSLSPSKELLMKNTTKLEEADDKEDEDFEEFEIQEIDEIELDEPEKTPAKEEEVDPNDFREKIKRRLQKALQNKKK</original>
    <variation>DLGELNPSNLADFGNESFLPKTKGKRPQNVRCGLAPDQKCVRTLDDWDRIRYDRTRSGDVLVYDGYRYDRRANYNDIIYWGCAKKRLSCNVYMITHKNKPTYVAISGVHNHL</variation>
    <location>
        <begin position="403"/>
        <end position="610"/>
    </location>
</feature>
<feature type="splice variant" id="VSP_050703" description="In isoform I." evidence="25">
    <original>AATSASATKIPPRKRGRPKTKVEDQTPKPKLLEKLQAATLNEEASEPAVYASTTKGGVKLIFNGHLFKFSFRKADYSVFQCCYREHGEECKVRVVCDQKRVFPYEGEHVHFMQASDKSCLPSQFMPGESGVISSLSPSKELLMKNTTKLEEADDKEDEDFEEFEIQEIDEIELDEPEKTPAKEEEVDPNDFREKIKRRLQKALQNKKK</original>
    <variation>VCDDLDDMKGAIKHSLLTFIRGQRGCKLLAFNGHNYVRNRRSNLKTYWICSKKGSTKCNARVVTNVVEGVHKIVLESCHHTCLNTERKKRLSVTNVVGKARSKSEKSVSTGFIKEEGDEDLTLELRTLNLSIEDLNNLQ</variation>
    <location>
        <begin position="403"/>
        <end position="610"/>
    </location>
</feature>
<feature type="splice variant" id="VSP_050717" description="In isoform J." evidence="25">
    <original>AATSASATKIPPRKRGRPKTKVEDQTPKPKLLEKLQAATLNEEASEPAVYASTTKGGVKLIFNGHLFKFSFRKADYSVFQCCYREHGEECKVRVVCDQKRVFPYEGEHVHFMQASDKSCLPSQFMPGESGVISSLSPSKELLMKNTTKLEEADDKEDEDFEEFEIQEIDEIELDEPEKTPAKEEEVDPNDFREKIKRRLQKALQNKKK</original>
    <variation>GSVAYYSYITGFRGSRKLKIGEFSFTRNKTSGLKTYWSCARAGVHKCKARVVTAQDHDVTIKCGQHNHPPY</variation>
    <location>
        <begin position="403"/>
        <end position="610"/>
    </location>
</feature>
<feature type="splice variant" id="VSP_050718" description="In isoform K." evidence="25">
    <original>AATSASATKIPPRKRGRPKTKVEDQTPKPKLLEKLQAATLNEEASEPAVYASTTKGGVKLIFNGHLFKFSFRKADYSVFQCCYREHGEECKVRVVCDQKRVFPYEGEHVHFMQASDKSCLPSQFMPGESGVISSLSPSKELLMKNTTKLEEADDKEDEDFEEFEIQEIDEIELDEPEKTPAKEEEVDPNDFREKIKRRLQKALQNKKK</original>
    <variation>GQFIGDIPRGQWIDKHEYFFLKNQKQGFNLVFNGYMYKKEASFRATVNWICSDGNGKRLNENKCSARAITKFDGGIKLGKNAHNHPPRFLGGKVPAKLMPKDAFYPQY</variation>
    <location>
        <begin position="403"/>
        <end position="610"/>
    </location>
</feature>
<feature type="splice variant" id="VSP_050720" description="In isoform M." evidence="25">
    <original>AATSASATKIPPRKRGRPKTKVEDQTPKPKLLEKLQAATLNEEASEPAVYASTTKGGVKLIFNGHLFKFSFRKADYSVFQCCYREHGEECKVRVVCDQKRVFPYEGEHVHFMQASDKSCLPSQFMPGESGVISSLSPSKELLMKNTTKLEEADDKEDEDFEEFEIQEIDEIELDEPEKTPAKEEEVDPNDFREKIKRRLQKALQNKKK</original>
    <variation>DRKRYSKKFLNFDGPAEFSLAAHRRPRLIIANKHFIVHRILGKDNLIGSWRCMYHHKGCKARATTFMVDSEVKYRSTCSSHNHKNVRSQQQSLKMPWVFTD</variation>
    <location>
        <begin position="403"/>
        <end position="610"/>
    </location>
</feature>
<feature type="splice variant" id="VSP_050700" description="In isoform N." evidence="25">
    <original>AATSASATKIPPRKRGRPKTKVEDQTPKPKLLEKLQAATLNEEASEPAVYASTTKGGVKLIFNGHLFKFSFRKADYSVFQCCYREHGEECKVRVVCDQKRVFPYEGEHVHFMQASDKSCLPSQFMPGESGVISSLSPSKELLMKNTTKLEEADDKEDEDFEEFEIQEIDEIELDEPEKTPAKEEEVDPNDFREKIKRRLQKALQNKKK</original>
    <variation>DTEISFIRSQKKNAQLVFRNYIYNKKLTQANGQTTWRCADVLKLRCKAVVITRDGHFIDARRQHNHESHASRIGQRQLYKVEQELEEYIEICTSNPKISQYLGSSNIIVTAKDGKDCKLFLPAAEATEIEMQALVDAAEEELDEEERHAEERIRDRQRVGRWRTEEAKHRSLLKSEHP</variation>
    <location>
        <begin position="403"/>
        <end position="610"/>
    </location>
</feature>
<feature type="splice variant" id="VSP_050702" description="In isoform O." evidence="25">
    <original>AATSASATKIPPRKRGRPKTKVEDQTPKPKLLEKLQAATLNEEASEPAVYASTTKGGVKLIFNGHLFKFSFRKADYSVFQCCYREHGEECKVRVVCDQKRVFPYEGEHVHFMQASDKSCLPSQFMPGESGVISSLSPSKELLMKNTTKLEEADDKEDEDFEEFEIQEIDEIELDEPEKTPAKEEEVDPNDFREKIKRRLQKALQNKKK</original>
    <variation>EDELVFIESPWSTPCLVLNGYMYNCHSRKSNKQYWRCHNYSKKAHEMRCRSRCVLENGRLKSVTGGLHNHQPHTEKIDKIIQRNKMAAIGTGRKLSRTHSFTQLQLQEQKQEFIDEHQLTSDAATLQLTDQELMHASMMLMHE</variation>
    <location>
        <begin position="403"/>
        <end position="610"/>
    </location>
</feature>
<feature type="splice variant" id="VSP_050721" description="In isoform Q." evidence="25">
    <original>AATSASATKIPPRKRGRPKTKVEDQTPKPKLLEKLQAATLNEEASEPAVYASTTKGGVKLIFNGHLFKFSFRKADYSVFQCCYREHGEECKVRVVCDQKRVFPYEGEHVHFMQASDKSCLPSQFMPGESGVISSLSPSKELLMKNTTKLEEADDKEDEDFEEFEIQEIDEIELDEPEKTPAKEEEVDPNDFREKIKRRLQKALQNKKK</original>
    <variation>GCDGLQGSCRDRGGQKLTGANHQMHLRA</variation>
    <location>
        <begin position="403"/>
        <end position="610"/>
    </location>
</feature>
<feature type="splice variant" id="VSP_050722" description="In isoform R." evidence="25">
    <original>AATSASATKIPPRKRGRPKTKVEDQTPKPKLLEKLQAATLNEEASEPAVYASTTKGGVKLIFNGHLFKFSFRKADYSVFQCCYREHGEECKVRVVCDQKRVFPYEGEHVHFMQASDKSCLPSQFMPGESGVISSLSPSKELLMKNTTKLEEADDKEDEDFEEFEIQEIDEIELDEPEKTPAKEEEVDPNDFREKIKRRLQKALQNKKK</original>
    <variation>GTSHLATFSCTRKKKRKLVIDRHEFVMDRKLKSSINWRCARYRSSNCKVRATTHVQKNGLEVYRLKYAKHSHL</variation>
    <location>
        <begin position="403"/>
        <end position="610"/>
    </location>
</feature>
<feature type="splice variant" id="VSP_050723" description="In isoform S." evidence="25">
    <original>AATSASATKIPPRKRGRPKTKVEDQTPKPKLLEKLQAATLNEEASEPAVYASTTKGGVKLIFNGHLFKFSFRKADYSVFQCCYREHGEECKVRVVCDQKRVFPYEGEHVHFMQASDKSCLPSQFMPGESGVISSLSPSKELLMKNTTKLEEADDKEDEDFEEFEIQEIDEIELDEPEKTPAKEEEVDPNDFREKIKRRLQKALQNKKK</original>
    <variation>GLIFKAARHIAPIQKVRQVRDDKFLATIIKLEPAGRLNLKNPDNIIRTSSNEHNFVYVGLPRMKGKCVNCLKKNRTGLRRINTLCNTCPGSNWMCEPCFEELHS</variation>
    <location>
        <begin position="403"/>
        <end position="610"/>
    </location>
</feature>
<feature type="splice variant" id="VSP_010286" description="In isoform 53.6." evidence="25 26">
    <original>ATSASATKIPPRKRGRPKTKVEDQTPKPKLLEKLQAATLNEEASEPAVYASTTKGGVKLIFNGHLFKFSFRKADYSVFQCCYREHGEECKVRVVCDQKRVFPYEGEHVHFMQASDKSCLPSQFMPGESGVISSLSPSKELLMKNTTKLEEADDKEDEDFEEFEIQEIDEIELDEPEKTPAKEEEVDPNDFREKIKRRLQKALQNKKK</original>
    <variation>CYQLVPNRRGGKNLIFQGHMYSVERKYRNSINWVCSKNSNSVLRCPARCVTNPESGNGIKLSHRRHNHPADAFKPHKRCRKRPGDRK</variation>
    <location>
        <begin position="404"/>
        <end position="610"/>
    </location>
</feature>
<feature type="splice variant" id="VSP_034706" description="In isoform AC." evidence="31">
    <original>ATSASATKIPPRKRGRPKTKVEDQTPKPKLLEKLQAATLNEEASEPAVYASTTKGGVKLIFNGHLFKFSFRKADYSVFQCCYREHGEECKVRVVCDQKRVFPYEGEHVHFMQASDKSCLPSQFMPGESGVISSLSPSKELLMKNTTKLEEADDKEDEDFEEFEIQEIDEIELDEPEKTPAKEEEVDPNDFREKIKRRLQKALQNKKK</original>
    <variation>FHIDFADSKKNGGKLLVINGFRFFRNKKRGHLQYWKCRNYYKERCPAIAIHDESTLILRLCHQHQHTESNDIEIKPLPGSETKLAESAEDEAQAEPEAELDNETDPDTNHEPARVPPLIMEPPPLLEIKSKLRNQDF</variation>
    <location>
        <begin position="404"/>
        <end position="610"/>
    </location>
</feature>
<feature type="splice variant" id="VSP_050719" description="In isoform L." evidence="26">
    <original>ATSASATKIPPRKRGRPKTKVEDQTPKPKLLEKLQAATLNEEASEPAVYASTTKGGVKLIFNGHLFKFSFRKADYSVFQCCYREHGEECKVRVVCDQKRVFPYEGEHVHFMQASDKSCLPSQFMPGESGVISSLSPSKELLMKNTTKLEEADDKEDEDFEEFEIQEIDEIELDEPEKTPAKEEEVDPNDFREKIKRRLQKALQNKKK</original>
    <variation>KDQNKGVLLKRTAQGEFLVVNGKSYKKTRAMQYRTYFHCLTRNCPTYYVLVELSRRPRLTRHHEHAQHCLQCY</variation>
    <location>
        <begin position="404"/>
        <end position="610"/>
    </location>
</feature>
<feature type="splice variant" id="VSP_050705" description="In isoform P." evidence="24 26 30">
    <original>ATSASATKIPPRKRGRPKTKVEDQTPKPKLLEKLQAATLNEEASEPAVYASTTKGGVKLIFNGHLFKFSFRKADYSVFQCCYREHGEECKVRVVCDQKRVFPYEGEHVHFMQASDKSCLPSQFMPGESGVISSLSPSKELLMKNTTKLEEADDKEDEDFEEFEIQEIDEIELDEPEKTPAKEEEVDPNDFREKIKRRLQKALQNKKK</original>
    <variation>KFDYQISVDVGEATMQLANASSAGVVNSNSPFFIVSKYGTKQIMLKQHTFNRHICRDDVTYWRCSQFAVLRCRARLKTKLDTLTILNSEHNHEVITKARKYGSLKRQRAEAEAAARAERRQDPLETAATSAPATTT</variation>
    <location>
        <begin position="404"/>
        <end position="610"/>
    </location>
</feature>
<feature type="splice variant" id="VSP_010289" description="In isoform mod1.8." evidence="27">
    <original>GVKLIFNGHLFKFSFRKADYSVFQCCYREHGEECKVRVVCDQKRVFPYEGEHVHFMQASDKSCLPSQFMPGESGVISSLSPSKELLMKNTTKLEEADDKEDEDFEEFEIQEIDEIELDEPEKTPAKEEEVDPNDFREKIKRRLQKALQNKKK</original>
    <variation>DPTRPQLWSSDVPDQPQATLLTINNFVYRANLKFFGKSNNILYWECVKTDRLSAAVALKTIGDDLYVTNGSYSAVSKCKGHLMASFHLQMCTITWATTSVLRRPRRLDADPQEVEFPHSRRQNPGFLENGHRGQPRPSAQDVAASILPTQTFVFC</variation>
    <location>
        <begin position="459"/>
        <end position="610"/>
    </location>
</feature>
<feature type="mutagenesis site" description="In allele mod(mdg4)351; embryonic lethal; when associated with S-92.">
    <original>D</original>
    <variation>N</variation>
    <location>
        <position position="33"/>
    </location>
</feature>
<feature type="mutagenesis site" description="In allele mod(mdg4)351; embryonic lethal; when associated with N-33.">
    <original>G</original>
    <variation>S</variation>
    <location>
        <position position="92"/>
    </location>
</feature>
<feature type="sequence conflict" description="In Ref. 2; AAA82988/AAA82989/AAA82990 and 3; AAC17459." evidence="31" ref="2 3">
    <original>QQ</original>
    <variation>HE</variation>
    <location>
        <begin position="151"/>
        <end position="152"/>
    </location>
</feature>
<feature type="sequence conflict" description="In Ref. 9; AAL33875." evidence="31" ref="9">
    <original>G</original>
    <variation>V</variation>
    <location>
        <position position="466"/>
    </location>
</feature>
<feature type="sequence conflict" description="In Ref. 1; CAA53216 and 4; CAB85487." evidence="31" ref="1 4">
    <original>E</original>
    <variation>K</variation>
    <location>
        <position position="507"/>
    </location>
</feature>
<feature type="sequence conflict" description="In Ref. 4; CAB85483." evidence="31" ref="4">
    <original>M</original>
    <variation>I</variation>
    <location sequence="Q86B87-5">
        <position position="543"/>
    </location>
</feature>
<feature type="sequence conflict" description="In Ref. 4; CAB85480." evidence="31" ref="4">
    <original>S</original>
    <variation>T</variation>
    <location sequence="Q86B87-8">
        <position position="521"/>
    </location>
</feature>
<feature type="sequence conflict" description="In Ref. 1; CAA53215." evidence="31" ref="1">
    <original>V</original>
    <variation>A</variation>
    <location sequence="Q86B87-9">
        <position position="422"/>
    </location>
</feature>
<feature type="sequence conflict" description="In Ref. 4; CAB85478." evidence="31" ref="4">
    <original>D</original>
    <variation>A</variation>
    <location sequence="Q86B87-10">
        <position position="447"/>
    </location>
</feature>
<feature type="sequence conflict" description="In Ref. 4; CAB85477." evidence="31" ref="4">
    <original>A</original>
    <variation>P</variation>
    <location sequence="Q86B87-11">
        <position position="484"/>
    </location>
</feature>
<feature type="sequence conflict" description="In Ref. 5; CAC51387." evidence="31" ref="5">
    <original>A</original>
    <variation>T</variation>
    <location sequence="Q86B87-18">
        <position position="469"/>
    </location>
</feature>
<feature type="sequence conflict" description="In Ref. 5; CAC51489." evidence="31" ref="5">
    <original>N</original>
    <variation>D</variation>
    <location sequence="Q86B87-23">
        <position position="458"/>
    </location>
</feature>
<organism>
    <name type="scientific">Drosophila melanogaster</name>
    <name type="common">Fruit fly</name>
    <dbReference type="NCBI Taxonomy" id="7227"/>
    <lineage>
        <taxon>Eukaryota</taxon>
        <taxon>Metazoa</taxon>
        <taxon>Ecdysozoa</taxon>
        <taxon>Arthropoda</taxon>
        <taxon>Hexapoda</taxon>
        <taxon>Insecta</taxon>
        <taxon>Pterygota</taxon>
        <taxon>Neoptera</taxon>
        <taxon>Endopterygota</taxon>
        <taxon>Diptera</taxon>
        <taxon>Brachycera</taxon>
        <taxon>Muscomorpha</taxon>
        <taxon>Ephydroidea</taxon>
        <taxon>Drosophilidae</taxon>
        <taxon>Drosophila</taxon>
        <taxon>Sophophora</taxon>
    </lineage>
</organism>
<keyword id="KW-0025">Alternative splicing</keyword>
<keyword id="KW-0053">Apoptosis</keyword>
<keyword id="KW-0156">Chromatin regulator</keyword>
<keyword id="KW-0158">Chromosome</keyword>
<keyword id="KW-0479">Metal-binding</keyword>
<keyword id="KW-0539">Nucleus</keyword>
<keyword id="KW-0597">Phosphoprotein</keyword>
<keyword id="KW-1185">Reference proteome</keyword>
<keyword id="KW-0804">Transcription</keyword>
<keyword id="KW-0805">Transcription regulation</keyword>
<keyword id="KW-0862">Zinc</keyword>
<keyword id="KW-0863">Zinc-finger</keyword>
<proteinExistence type="evidence at protein level"/>
<protein>
    <recommendedName>
        <fullName>Modifier of mdg4</fullName>
    </recommendedName>
</protein>
<dbReference type="EMBL" id="X75498">
    <property type="protein sequence ID" value="CAA53215.1"/>
    <property type="molecule type" value="Genomic_DNA"/>
</dbReference>
<dbReference type="EMBL" id="X75499">
    <property type="protein sequence ID" value="CAA53216.1"/>
    <property type="molecule type" value="mRNA"/>
</dbReference>
<dbReference type="EMBL" id="U30905">
    <property type="protein sequence ID" value="AAA82988.1"/>
    <property type="molecule type" value="mRNA"/>
</dbReference>
<dbReference type="EMBL" id="U30913">
    <property type="protein sequence ID" value="AAA82989.1"/>
    <property type="molecule type" value="mRNA"/>
</dbReference>
<dbReference type="EMBL" id="U30914">
    <property type="protein sequence ID" value="AAA82990.1"/>
    <property type="status" value="ALT_SEQ"/>
    <property type="molecule type" value="mRNA"/>
</dbReference>
<dbReference type="EMBL" id="U62802">
    <property type="protein sequence ID" value="AAC17459.1"/>
    <property type="molecule type" value="mRNA"/>
</dbReference>
<dbReference type="EMBL" id="AJ277174">
    <property type="protein sequence ID" value="CAB85469.1"/>
    <property type="molecule type" value="mRNA"/>
</dbReference>
<dbReference type="EMBL" id="AJ277175">
    <property type="protein sequence ID" value="CAB85470.1"/>
    <property type="molecule type" value="mRNA"/>
</dbReference>
<dbReference type="EMBL" id="AJ277176">
    <property type="protein sequence ID" value="CAB85471.1"/>
    <property type="molecule type" value="mRNA"/>
</dbReference>
<dbReference type="EMBL" id="AJ277177">
    <property type="protein sequence ID" value="CAB85472.1"/>
    <property type="molecule type" value="mRNA"/>
</dbReference>
<dbReference type="EMBL" id="AJ277178">
    <property type="protein sequence ID" value="CAB85473.1"/>
    <property type="molecule type" value="mRNA"/>
</dbReference>
<dbReference type="EMBL" id="AJ277179">
    <property type="protein sequence ID" value="CAB85474.1"/>
    <property type="molecule type" value="mRNA"/>
</dbReference>
<dbReference type="EMBL" id="AJ277180">
    <property type="protein sequence ID" value="CAB85475.1"/>
    <property type="molecule type" value="mRNA"/>
</dbReference>
<dbReference type="EMBL" id="AJ277181">
    <property type="protein sequence ID" value="CAB85476.1"/>
    <property type="molecule type" value="mRNA"/>
</dbReference>
<dbReference type="EMBL" id="AJ277182">
    <property type="protein sequence ID" value="CAB85477.1"/>
    <property type="molecule type" value="mRNA"/>
</dbReference>
<dbReference type="EMBL" id="AJ277183">
    <property type="protein sequence ID" value="CAB85478.1"/>
    <property type="molecule type" value="mRNA"/>
</dbReference>
<dbReference type="EMBL" id="AJ277184">
    <property type="protein sequence ID" value="CAB85479.1"/>
    <property type="molecule type" value="mRNA"/>
</dbReference>
<dbReference type="EMBL" id="AJ277185">
    <property type="protein sequence ID" value="CAB85480.1"/>
    <property type="molecule type" value="mRNA"/>
</dbReference>
<dbReference type="EMBL" id="AJ277186">
    <property type="protein sequence ID" value="CAB85481.1"/>
    <property type="molecule type" value="mRNA"/>
</dbReference>
<dbReference type="EMBL" id="AJ277187">
    <property type="protein sequence ID" value="CAB85482.1"/>
    <property type="molecule type" value="mRNA"/>
</dbReference>
<dbReference type="EMBL" id="AJ277188">
    <property type="protein sequence ID" value="CAB85483.1"/>
    <property type="molecule type" value="mRNA"/>
</dbReference>
<dbReference type="EMBL" id="AJ277189">
    <property type="protein sequence ID" value="CAB85484.1"/>
    <property type="molecule type" value="mRNA"/>
</dbReference>
<dbReference type="EMBL" id="AJ277190">
    <property type="protein sequence ID" value="CAB85485.1"/>
    <property type="molecule type" value="mRNA"/>
</dbReference>
<dbReference type="EMBL" id="AJ277191">
    <property type="protein sequence ID" value="CAB85486.1"/>
    <property type="molecule type" value="mRNA"/>
</dbReference>
<dbReference type="EMBL" id="AJ277192">
    <property type="protein sequence ID" value="CAB85487.1"/>
    <property type="molecule type" value="mRNA"/>
</dbReference>
<dbReference type="EMBL" id="AJ277193">
    <property type="protein sequence ID" value="CAB85488.1"/>
    <property type="molecule type" value="mRNA"/>
</dbReference>
<dbReference type="EMBL" id="AJ277194">
    <property type="protein sequence ID" value="CAB85489.1"/>
    <property type="molecule type" value="mRNA"/>
</dbReference>
<dbReference type="EMBL" id="AJ320161">
    <property type="protein sequence ID" value="CAC51387.1"/>
    <property type="molecule type" value="mRNA"/>
</dbReference>
<dbReference type="EMBL" id="AJ320162">
    <property type="protein sequence ID" value="CAC51487.1"/>
    <property type="molecule type" value="mRNA"/>
</dbReference>
<dbReference type="EMBL" id="AJ320163">
    <property type="protein sequence ID" value="CAC51488.1"/>
    <property type="molecule type" value="mRNA"/>
</dbReference>
<dbReference type="EMBL" id="AJ320164">
    <property type="protein sequence ID" value="CAC51489.1"/>
    <property type="molecule type" value="mRNA"/>
</dbReference>
<dbReference type="EMBL" id="AJ320165">
    <property type="protein sequence ID" value="CAC51388.1"/>
    <property type="molecule type" value="mRNA"/>
</dbReference>
<dbReference type="EMBL" id="AE014297">
    <property type="protein sequence ID" value="AAF55882.2"/>
    <property type="molecule type" value="Genomic_DNA"/>
</dbReference>
<dbReference type="EMBL" id="AE014297">
    <property type="protein sequence ID" value="AAF55883.2"/>
    <property type="molecule type" value="Genomic_DNA"/>
</dbReference>
<dbReference type="EMBL" id="AE014297">
    <property type="protein sequence ID" value="AAF55884.1"/>
    <property type="molecule type" value="Genomic_DNA"/>
</dbReference>
<dbReference type="EMBL" id="AE014297">
    <property type="protein sequence ID" value="AAF55885.2"/>
    <property type="molecule type" value="Genomic_DNA"/>
</dbReference>
<dbReference type="EMBL" id="AE014297">
    <property type="protein sequence ID" value="AAF55888.1"/>
    <property type="molecule type" value="Genomic_DNA"/>
</dbReference>
<dbReference type="EMBL" id="AE014297">
    <property type="protein sequence ID" value="AAN13862.1"/>
    <property type="molecule type" value="Genomic_DNA"/>
</dbReference>
<dbReference type="EMBL" id="AE014297">
    <property type="protein sequence ID" value="AAN13863.1"/>
    <property type="molecule type" value="Genomic_DNA"/>
</dbReference>
<dbReference type="EMBL" id="AE014297">
    <property type="protein sequence ID" value="AAN13864.1"/>
    <property type="molecule type" value="Genomic_DNA"/>
</dbReference>
<dbReference type="EMBL" id="AE014297">
    <property type="protein sequence ID" value="AAN13865.1"/>
    <property type="molecule type" value="Genomic_DNA"/>
</dbReference>
<dbReference type="EMBL" id="AE014297">
    <property type="protein sequence ID" value="AAN13866.1"/>
    <property type="molecule type" value="Genomic_DNA"/>
</dbReference>
<dbReference type="EMBL" id="AE014297">
    <property type="protein sequence ID" value="AAN13867.1"/>
    <property type="molecule type" value="Genomic_DNA"/>
</dbReference>
<dbReference type="EMBL" id="AE014297">
    <property type="protein sequence ID" value="AAN13868.1"/>
    <property type="molecule type" value="Genomic_DNA"/>
</dbReference>
<dbReference type="EMBL" id="AE014297">
    <property type="protein sequence ID" value="AAN13869.1"/>
    <property type="molecule type" value="Genomic_DNA"/>
</dbReference>
<dbReference type="EMBL" id="AE014297">
    <property type="protein sequence ID" value="AAN13870.1"/>
    <property type="status" value="ALT_INIT"/>
    <property type="molecule type" value="Genomic_DNA"/>
</dbReference>
<dbReference type="EMBL" id="AE014297">
    <property type="protein sequence ID" value="AAN13871.1"/>
    <property type="molecule type" value="Genomic_DNA"/>
</dbReference>
<dbReference type="EMBL" id="AE014297">
    <property type="protein sequence ID" value="AAN13872.1"/>
    <property type="molecule type" value="Genomic_DNA"/>
</dbReference>
<dbReference type="EMBL" id="AE014297">
    <property type="protein sequence ID" value="AAN13873.1"/>
    <property type="molecule type" value="Genomic_DNA"/>
</dbReference>
<dbReference type="EMBL" id="AE014297">
    <property type="protein sequence ID" value="AAN13874.1"/>
    <property type="molecule type" value="Genomic_DNA"/>
</dbReference>
<dbReference type="EMBL" id="AE014297">
    <property type="protein sequence ID" value="AAN13875.1"/>
    <property type="molecule type" value="Genomic_DNA"/>
</dbReference>
<dbReference type="EMBL" id="AE014297">
    <property type="protein sequence ID" value="AAO41581.1"/>
    <property type="molecule type" value="Genomic_DNA"/>
</dbReference>
<dbReference type="EMBL" id="AE014297">
    <property type="protein sequence ID" value="AAO41582.1"/>
    <property type="molecule type" value="Genomic_DNA"/>
</dbReference>
<dbReference type="EMBL" id="AE014297">
    <property type="protein sequence ID" value="AAO41583.1"/>
    <property type="molecule type" value="Genomic_DNA"/>
</dbReference>
<dbReference type="EMBL" id="AE014297">
    <property type="protein sequence ID" value="ABW08718.1"/>
    <property type="molecule type" value="Genomic_DNA"/>
</dbReference>
<dbReference type="EMBL" id="AE014297">
    <property type="protein sequence ID" value="ABW08719.1"/>
    <property type="molecule type" value="Genomic_DNA"/>
</dbReference>
<dbReference type="EMBL" id="AE014297">
    <property type="protein sequence ID" value="ABW08720.1"/>
    <property type="molecule type" value="Genomic_DNA"/>
</dbReference>
<dbReference type="EMBL" id="AY061580">
    <property type="protein sequence ID" value="AAL29128.1"/>
    <property type="status" value="ALT_SEQ"/>
    <property type="molecule type" value="mRNA"/>
</dbReference>
<dbReference type="EMBL" id="BT003484">
    <property type="protein sequence ID" value="AAO39487.1"/>
    <property type="molecule type" value="mRNA"/>
</dbReference>
<dbReference type="EMBL" id="BT003579">
    <property type="protein sequence ID" value="AAO39583.1"/>
    <property type="molecule type" value="mRNA"/>
</dbReference>
<dbReference type="EMBL" id="BT029698">
    <property type="protein sequence ID" value="ABL75755.1"/>
    <property type="molecule type" value="mRNA"/>
</dbReference>
<dbReference type="EMBL" id="AF214648">
    <property type="protein sequence ID" value="AAL33873.1"/>
    <property type="molecule type" value="Genomic_DNA"/>
</dbReference>
<dbReference type="EMBL" id="AF214649">
    <property type="protein sequence ID" value="AAL33874.1"/>
    <property type="molecule type" value="Genomic_DNA"/>
</dbReference>
<dbReference type="EMBL" id="AF214650">
    <property type="protein sequence ID" value="AAL33875.1"/>
    <property type="molecule type" value="Genomic_DNA"/>
</dbReference>
<dbReference type="RefSeq" id="NP_001097856.1">
    <molecule id="Q86B87-29"/>
    <property type="nucleotide sequence ID" value="NM_001104386.2"/>
</dbReference>
<dbReference type="RefSeq" id="NP_001097857.1">
    <molecule id="Q86B87-31"/>
    <property type="nucleotide sequence ID" value="NM_001104387.2"/>
</dbReference>
<dbReference type="RefSeq" id="NP_001097858.1">
    <molecule id="Q86B87-30"/>
    <property type="nucleotide sequence ID" value="NM_001104388.2"/>
</dbReference>
<dbReference type="RefSeq" id="NP_524936.2">
    <molecule id="Q86B87-8"/>
    <property type="nucleotide sequence ID" value="NM_080197.3"/>
</dbReference>
<dbReference type="RefSeq" id="NP_732619.1">
    <molecule id="Q86B87-20"/>
    <property type="nucleotide sequence ID" value="NM_163877.2"/>
</dbReference>
<dbReference type="RefSeq" id="NP_732620.1">
    <molecule id="Q86B87-17"/>
    <property type="nucleotide sequence ID" value="NM_163878.2"/>
</dbReference>
<dbReference type="RefSeq" id="NP_732621.1">
    <molecule id="Q86B87-24"/>
    <property type="nucleotide sequence ID" value="NM_163879.2"/>
</dbReference>
<dbReference type="RefSeq" id="NP_732622.1">
    <molecule id="Q86B87-15"/>
    <property type="nucleotide sequence ID" value="NM_163880.2"/>
</dbReference>
<dbReference type="RefSeq" id="NP_732623.2">
    <property type="nucleotide sequence ID" value="NM_163881.2"/>
</dbReference>
<dbReference type="RefSeq" id="NP_732624.1">
    <molecule id="Q86B87-10"/>
    <property type="nucleotide sequence ID" value="NM_163882.2"/>
</dbReference>
<dbReference type="RefSeq" id="NP_732625.1">
    <molecule id="Q86B87-27"/>
    <property type="nucleotide sequence ID" value="NM_163883.2"/>
</dbReference>
<dbReference type="RefSeq" id="NP_732626.1">
    <molecule id="Q86B87-6"/>
    <property type="nucleotide sequence ID" value="NM_163884.2"/>
</dbReference>
<dbReference type="RefSeq" id="NP_732627.1">
    <molecule id="Q86B87-19"/>
    <property type="nucleotide sequence ID" value="NM_163885.2"/>
</dbReference>
<dbReference type="RefSeq" id="NP_732628.1">
    <molecule id="Q86B87-7"/>
    <property type="nucleotide sequence ID" value="NM_163886.2"/>
</dbReference>
<dbReference type="RefSeq" id="NP_732629.1">
    <molecule id="Q86B87-18"/>
    <property type="nucleotide sequence ID" value="NM_163887.2"/>
</dbReference>
<dbReference type="RefSeq" id="NP_732630.1">
    <molecule id="Q86B87-11"/>
    <property type="nucleotide sequence ID" value="NM_163888.2"/>
</dbReference>
<dbReference type="RefSeq" id="NP_732631.1">
    <molecule id="Q86B87-14"/>
    <property type="nucleotide sequence ID" value="NM_163889.2"/>
</dbReference>
<dbReference type="RefSeq" id="NP_732632.1">
    <molecule id="Q86B87-2"/>
    <property type="nucleotide sequence ID" value="NM_163890.2"/>
</dbReference>
<dbReference type="RefSeq" id="NP_732633.1">
    <molecule id="Q86B87-9"/>
    <property type="nucleotide sequence ID" value="NM_163891.2"/>
</dbReference>
<dbReference type="RefSeq" id="NP_732634.1">
    <molecule id="Q86B87-12"/>
    <property type="nucleotide sequence ID" value="NM_163892.2"/>
</dbReference>
<dbReference type="RefSeq" id="NP_732635.1">
    <molecule id="Q86B87-5"/>
    <property type="nucleotide sequence ID" value="NM_163893.2"/>
</dbReference>
<dbReference type="RefSeq" id="NP_732636.1">
    <molecule id="Q86B87-3"/>
    <property type="nucleotide sequence ID" value="NM_163894.2"/>
</dbReference>
<dbReference type="RefSeq" id="NP_788698.1">
    <molecule id="Q86B87-1"/>
    <property type="nucleotide sequence ID" value="NM_176521.1"/>
</dbReference>
<dbReference type="RefSeq" id="NP_788699.1">
    <molecule id="Q86B87-25"/>
    <property type="nucleotide sequence ID" value="NM_176522.1"/>
</dbReference>
<dbReference type="RefSeq" id="NP_788700.1">
    <molecule id="Q86B87-23"/>
    <property type="nucleotide sequence ID" value="NM_176523.1"/>
</dbReference>
<dbReference type="RefSeq" id="NP_788701.1">
    <molecule id="Q86B87-28"/>
    <property type="nucleotide sequence ID" value="NM_176524.1"/>
</dbReference>
<dbReference type="RefSeq" id="NP_788702.1">
    <molecule id="Q86B87-13"/>
    <property type="nucleotide sequence ID" value="NM_176525.1"/>
</dbReference>
<dbReference type="RefSeq" id="NP_788703.1">
    <molecule id="Q86B87-4"/>
    <property type="nucleotide sequence ID" value="NM_176526.1"/>
</dbReference>
<dbReference type="RefSeq" id="NP_788704.1">
    <molecule id="Q86B87-16"/>
    <property type="nucleotide sequence ID" value="NM_176527.1"/>
</dbReference>
<dbReference type="SMR" id="Q86B87"/>
<dbReference type="BioGRID" id="72097">
    <property type="interactions" value="84"/>
</dbReference>
<dbReference type="FunCoup" id="Q86B87">
    <property type="interactions" value="420"/>
</dbReference>
<dbReference type="IntAct" id="Q86B87">
    <property type="interactions" value="66"/>
</dbReference>
<dbReference type="MINT" id="Q86B87"/>
<dbReference type="STRING" id="7227.FBpp0083478"/>
<dbReference type="iPTMnet" id="Q86B87"/>
<dbReference type="PaxDb" id="7227-FBpp0083463"/>
<dbReference type="PeptideAtlas" id="Q86B87"/>
<dbReference type="DNASU" id="49228"/>
<dbReference type="EnsemblMetazoa" id="FBtr0084060">
    <molecule id="Q86B87-17"/>
    <property type="protein sequence ID" value="FBpp0083459"/>
    <property type="gene ID" value="FBgn0002781"/>
</dbReference>
<dbReference type="EnsemblMetazoa" id="FBtr0084061">
    <molecule id="Q86B87-27"/>
    <property type="protein sequence ID" value="FBpp0083460"/>
    <property type="gene ID" value="FBgn0002781"/>
</dbReference>
<dbReference type="EnsemblMetazoa" id="FBtr0084062">
    <molecule id="Q86B87-9"/>
    <property type="protein sequence ID" value="FBpp0083461"/>
    <property type="gene ID" value="FBgn0002781"/>
</dbReference>
<dbReference type="EnsemblMetazoa" id="FBtr0084063">
    <molecule id="Q86B87-24"/>
    <property type="protein sequence ID" value="FBpp0083462"/>
    <property type="gene ID" value="FBgn0002781"/>
</dbReference>
<dbReference type="EnsemblMetazoa" id="FBtr0084064">
    <molecule id="Q86B87-2"/>
    <property type="protein sequence ID" value="FBpp0083463"/>
    <property type="gene ID" value="FBgn0002781"/>
</dbReference>
<dbReference type="EnsemblMetazoa" id="FBtr0084065">
    <molecule id="Q86B87-8"/>
    <property type="protein sequence ID" value="FBpp0083464"/>
    <property type="gene ID" value="FBgn0002781"/>
</dbReference>
<dbReference type="EnsemblMetazoa" id="FBtr0084066">
    <molecule id="Q86B87-15"/>
    <property type="protein sequence ID" value="FBpp0083465"/>
    <property type="gene ID" value="FBgn0002781"/>
</dbReference>
<dbReference type="EnsemblMetazoa" id="FBtr0084067">
    <molecule id="Q86B87-10"/>
    <property type="protein sequence ID" value="FBpp0083466"/>
    <property type="gene ID" value="FBgn0002781"/>
</dbReference>
<dbReference type="EnsemblMetazoa" id="FBtr0084068">
    <molecule id="Q86B87-6"/>
    <property type="protein sequence ID" value="FBpp0083467"/>
    <property type="gene ID" value="FBgn0002781"/>
</dbReference>
<dbReference type="EnsemblMetazoa" id="FBtr0084069">
    <molecule id="Q86B87-19"/>
    <property type="protein sequence ID" value="FBpp0083468"/>
    <property type="gene ID" value="FBgn0002781"/>
</dbReference>
<dbReference type="EnsemblMetazoa" id="FBtr0084070">
    <molecule id="Q86B87-11"/>
    <property type="protein sequence ID" value="FBpp0083469"/>
    <property type="gene ID" value="FBgn0002781"/>
</dbReference>
<dbReference type="EnsemblMetazoa" id="FBtr0084071">
    <molecule id="Q86B87-18"/>
    <property type="protein sequence ID" value="FBpp0083470"/>
    <property type="gene ID" value="FBgn0002781"/>
</dbReference>
<dbReference type="EnsemblMetazoa" id="FBtr0084072">
    <molecule id="Q86B87-14"/>
    <property type="protein sequence ID" value="FBpp0083471"/>
    <property type="gene ID" value="FBgn0002781"/>
</dbReference>
<dbReference type="EnsemblMetazoa" id="FBtr0084073">
    <molecule id="Q86B87-3"/>
    <property type="protein sequence ID" value="FBpp0083472"/>
    <property type="gene ID" value="FBgn0002781"/>
</dbReference>
<dbReference type="EnsemblMetazoa" id="FBtr0084074">
    <molecule id="Q86B87-5"/>
    <property type="protein sequence ID" value="FBpp0083473"/>
    <property type="gene ID" value="FBgn0002781"/>
</dbReference>
<dbReference type="EnsemblMetazoa" id="FBtr0084075">
    <molecule id="Q86B87-7"/>
    <property type="protein sequence ID" value="FBpp0083474"/>
    <property type="gene ID" value="FBgn0002781"/>
</dbReference>
<dbReference type="EnsemblMetazoa" id="FBtr0084077">
    <molecule id="Q86B87-20"/>
    <property type="protein sequence ID" value="FBpp0083476"/>
    <property type="gene ID" value="FBgn0002781"/>
</dbReference>
<dbReference type="EnsemblMetazoa" id="FBtr0084078">
    <molecule id="Q86B87-12"/>
    <property type="protein sequence ID" value="FBpp0083477"/>
    <property type="gene ID" value="FBgn0002781"/>
</dbReference>
<dbReference type="EnsemblMetazoa" id="FBtr0084079">
    <molecule id="Q86B87-1"/>
    <property type="protein sequence ID" value="FBpp0083478"/>
    <property type="gene ID" value="FBgn0002781"/>
</dbReference>
<dbReference type="EnsemblMetazoa" id="FBtr0084080">
    <molecule id="Q86B87-16"/>
    <property type="protein sequence ID" value="FBpp0083479"/>
    <property type="gene ID" value="FBgn0002781"/>
</dbReference>
<dbReference type="EnsemblMetazoa" id="FBtr0084081">
    <molecule id="Q86B87-4"/>
    <property type="protein sequence ID" value="FBpp0083480"/>
    <property type="gene ID" value="FBgn0002781"/>
</dbReference>
<dbReference type="EnsemblMetazoa" id="FBtr0084082">
    <molecule id="Q86B87-13"/>
    <property type="protein sequence ID" value="FBpp0083481"/>
    <property type="gene ID" value="FBgn0002781"/>
</dbReference>
<dbReference type="EnsemblMetazoa" id="FBtr0084083">
    <molecule id="Q86B87-28"/>
    <property type="protein sequence ID" value="FBpp0083482"/>
    <property type="gene ID" value="FBgn0002781"/>
</dbReference>
<dbReference type="EnsemblMetazoa" id="FBtr0084084">
    <molecule id="Q86B87-23"/>
    <property type="protein sequence ID" value="FBpp0083483"/>
    <property type="gene ID" value="FBgn0002781"/>
</dbReference>
<dbReference type="EnsemblMetazoa" id="FBtr0084085">
    <molecule id="Q86B87-25"/>
    <property type="protein sequence ID" value="FBpp0083484"/>
    <property type="gene ID" value="FBgn0002781"/>
</dbReference>
<dbReference type="EnsemblMetazoa" id="FBtr0114359">
    <molecule id="Q86B87-29"/>
    <property type="protein sequence ID" value="FBpp0112908"/>
    <property type="gene ID" value="FBgn0002781"/>
</dbReference>
<dbReference type="EnsemblMetazoa" id="FBtr0114360">
    <molecule id="Q86B87-31"/>
    <property type="protein sequence ID" value="FBpp0112909"/>
    <property type="gene ID" value="FBgn0002781"/>
</dbReference>
<dbReference type="EnsemblMetazoa" id="FBtr0114361">
    <molecule id="Q86B87-30"/>
    <property type="protein sequence ID" value="FBpp0112910"/>
    <property type="gene ID" value="FBgn0002781"/>
</dbReference>
<dbReference type="GeneID" id="49228"/>
<dbReference type="KEGG" id="dme:Dmel_CG32491"/>
<dbReference type="UCSC" id="CG32491-RAA">
    <property type="organism name" value="d. melanogaster"/>
</dbReference>
<dbReference type="UCSC" id="CG32491-RAB">
    <property type="organism name" value="d. melanogaster"/>
</dbReference>
<dbReference type="UCSC" id="CG32491-RAC">
    <property type="organism name" value="d. melanogaster"/>
</dbReference>
<dbReference type="AGR" id="FB:FBgn0002781"/>
<dbReference type="CTD" id="49228"/>
<dbReference type="FlyBase" id="FBgn0002781">
    <property type="gene designation" value="mod(mdg4)"/>
</dbReference>
<dbReference type="VEuPathDB" id="VectorBase:FBgn0002781"/>
<dbReference type="eggNOG" id="ENOG502S6BI">
    <property type="taxonomic scope" value="Eukaryota"/>
</dbReference>
<dbReference type="HOGENOM" id="CLU_1514257_0_0_1"/>
<dbReference type="InParanoid" id="Q86B87"/>
<dbReference type="OMA" id="QINIECW"/>
<dbReference type="OrthoDB" id="8001951at2759"/>
<dbReference type="SignaLink" id="Q86B87"/>
<dbReference type="BioGRID-ORCS" id="49228">
    <property type="hits" value="2 hits in 3 CRISPR screens"/>
</dbReference>
<dbReference type="ChiTaRS" id="mod(mdg4)">
    <property type="organism name" value="fly"/>
</dbReference>
<dbReference type="GenomeRNAi" id="49228"/>
<dbReference type="PRO" id="PR:Q86B87"/>
<dbReference type="Proteomes" id="UP000000803">
    <property type="component" value="Chromosome 3R"/>
</dbReference>
<dbReference type="Bgee" id="FBgn0002781">
    <property type="expression patterns" value="Expressed in intestinal stem cell (Drosophila) in digestive tract and 295 other cell types or tissues"/>
</dbReference>
<dbReference type="ExpressionAtlas" id="Q86B87">
    <property type="expression patterns" value="baseline and differential"/>
</dbReference>
<dbReference type="GO" id="GO:0000785">
    <property type="term" value="C:chromatin"/>
    <property type="evidence" value="ECO:0000314"/>
    <property type="project" value="FlyBase"/>
</dbReference>
<dbReference type="GO" id="GO:0005634">
    <property type="term" value="C:nucleus"/>
    <property type="evidence" value="ECO:0000314"/>
    <property type="project" value="FlyBase"/>
</dbReference>
<dbReference type="GO" id="GO:0005700">
    <property type="term" value="C:polytene chromosome"/>
    <property type="evidence" value="ECO:0000314"/>
    <property type="project" value="FlyBase"/>
</dbReference>
<dbReference type="GO" id="GO:0005704">
    <property type="term" value="C:polytene chromosome band"/>
    <property type="evidence" value="ECO:0000314"/>
    <property type="project" value="FlyBase"/>
</dbReference>
<dbReference type="GO" id="GO:0003682">
    <property type="term" value="F:chromatin binding"/>
    <property type="evidence" value="ECO:0000314"/>
    <property type="project" value="FlyBase"/>
</dbReference>
<dbReference type="GO" id="GO:0003677">
    <property type="term" value="F:DNA binding"/>
    <property type="evidence" value="ECO:0000314"/>
    <property type="project" value="FlyBase"/>
</dbReference>
<dbReference type="GO" id="GO:0031208">
    <property type="term" value="F:POZ domain binding"/>
    <property type="evidence" value="ECO:0000314"/>
    <property type="project" value="FlyBase"/>
</dbReference>
<dbReference type="GO" id="GO:0042803">
    <property type="term" value="F:protein homodimerization activity"/>
    <property type="evidence" value="ECO:0000314"/>
    <property type="project" value="FlyBase"/>
</dbReference>
<dbReference type="GO" id="GO:0008270">
    <property type="term" value="F:zinc ion binding"/>
    <property type="evidence" value="ECO:0007669"/>
    <property type="project" value="UniProtKB-KW"/>
</dbReference>
<dbReference type="GO" id="GO:0006915">
    <property type="term" value="P:apoptotic process"/>
    <property type="evidence" value="ECO:0000315"/>
    <property type="project" value="UniProtKB"/>
</dbReference>
<dbReference type="GO" id="GO:0006325">
    <property type="term" value="P:chromatin organization"/>
    <property type="evidence" value="ECO:0007669"/>
    <property type="project" value="UniProtKB-KW"/>
</dbReference>
<dbReference type="GO" id="GO:0008354">
    <property type="term" value="P:germ cell migration"/>
    <property type="evidence" value="ECO:0000315"/>
    <property type="project" value="FlyBase"/>
</dbReference>
<dbReference type="GO" id="GO:0007060">
    <property type="term" value="P:male meiosis chromosome segregation"/>
    <property type="evidence" value="ECO:0000315"/>
    <property type="project" value="FlyBase"/>
</dbReference>
<dbReference type="GO" id="GO:0007141">
    <property type="term" value="P:male meiosis I"/>
    <property type="evidence" value="ECO:0000315"/>
    <property type="project" value="FlyBase"/>
</dbReference>
<dbReference type="GO" id="GO:0010032">
    <property type="term" value="P:meiotic chromosome condensation"/>
    <property type="evidence" value="ECO:0000315"/>
    <property type="project" value="FlyBase"/>
</dbReference>
<dbReference type="GO" id="GO:0048477">
    <property type="term" value="P:oogenesis"/>
    <property type="evidence" value="ECO:0000315"/>
    <property type="project" value="FlyBase"/>
</dbReference>
<dbReference type="GO" id="GO:1902275">
    <property type="term" value="P:regulation of chromatin organization"/>
    <property type="evidence" value="ECO:0000315"/>
    <property type="project" value="UniProtKB"/>
</dbReference>
<dbReference type="GO" id="GO:0006357">
    <property type="term" value="P:regulation of transcription by RNA polymerase II"/>
    <property type="evidence" value="ECO:0000318"/>
    <property type="project" value="GO_Central"/>
</dbReference>
<dbReference type="CDD" id="cd18315">
    <property type="entry name" value="BTB_POZ_BAB-like"/>
    <property type="match status" value="1"/>
</dbReference>
<dbReference type="FunFam" id="3.30.710.10:FF:000036">
    <property type="entry name" value="Mod(Mdg4), isoform H"/>
    <property type="match status" value="1"/>
</dbReference>
<dbReference type="Gene3D" id="2.20.25.240">
    <property type="match status" value="1"/>
</dbReference>
<dbReference type="Gene3D" id="3.30.710.10">
    <property type="entry name" value="Potassium Channel Kv1.1, Chain A"/>
    <property type="match status" value="1"/>
</dbReference>
<dbReference type="InterPro" id="IPR000210">
    <property type="entry name" value="BTB/POZ_dom"/>
</dbReference>
<dbReference type="InterPro" id="IPR051095">
    <property type="entry name" value="Dros_DevTransReg"/>
</dbReference>
<dbReference type="InterPro" id="IPR011333">
    <property type="entry name" value="SKP1/BTB/POZ_sf"/>
</dbReference>
<dbReference type="InterPro" id="IPR007588">
    <property type="entry name" value="Znf_FLYWCH"/>
</dbReference>
<dbReference type="PANTHER" id="PTHR23110">
    <property type="entry name" value="BTB DOMAIN TRANSCRIPTION FACTOR"/>
    <property type="match status" value="1"/>
</dbReference>
<dbReference type="PANTHER" id="PTHR23110:SF92">
    <property type="entry name" value="MODIFIER OF MDG4"/>
    <property type="match status" value="1"/>
</dbReference>
<dbReference type="Pfam" id="PF00651">
    <property type="entry name" value="BTB"/>
    <property type="match status" value="1"/>
</dbReference>
<dbReference type="Pfam" id="PF04500">
    <property type="entry name" value="FLYWCH"/>
    <property type="match status" value="1"/>
</dbReference>
<dbReference type="SMART" id="SM00225">
    <property type="entry name" value="BTB"/>
    <property type="match status" value="1"/>
</dbReference>
<dbReference type="SUPFAM" id="SSF54695">
    <property type="entry name" value="POZ domain"/>
    <property type="match status" value="1"/>
</dbReference>
<dbReference type="PROSITE" id="PS50097">
    <property type="entry name" value="BTB"/>
    <property type="match status" value="1"/>
</dbReference>
<name>MMD4_DROME</name>
<accession>Q86B87</accession>
<accession>A1A725</accession>
<accession>A8JR64</accession>
<accession>A8JR66</accession>
<accession>P91932</accession>
<accession>Q24099</accession>
<accession>Q24100</accession>
<accession>Q24101</accession>
<accession>Q24482</accession>
<accession>Q24483</accession>
<accession>Q86B84</accession>
<accession>Q86B85</accession>
<accession>Q86B86</accession>
<accession>Q8IN28</accession>
<accession>Q8IN29</accession>
<accession>Q8IN30</accession>
<accession>Q8IN31</accession>
<accession>Q8IN32</accession>
<accession>Q8IN33</accession>
<accession>Q8IN34</accession>
<accession>Q8WTI9</accession>
<accession>Q8WTJ0</accession>
<accession>Q8WTJ1</accession>
<accession>Q95R78</accession>
<accession>Q95ZF4</accession>
<accession>Q95ZF5</accession>
<accession>Q95ZF6</accession>
<accession>Q95ZF7</accession>
<accession>Q95ZF8</accession>
<accession>Q9N6U6</accession>
<accession>Q9N6U7</accession>
<accession>Q9N6U8</accession>
<accession>Q9N6U9</accession>
<accession>Q9N6V0</accession>
<accession>Q9N6V1</accession>
<accession>Q9N6V2</accession>
<accession>Q9N6V3</accession>
<accession>Q9N6V4</accession>
<accession>Q9N6V5</accession>
<accession>Q9N6V6</accession>
<accession>Q9N6V7</accession>
<accession>Q9N6V8</accession>
<accession>Q9N6V9</accession>
<accession>Q9N6W0</accession>
<accession>Q9N6W1</accession>
<accession>Q9N6W2</accession>
<accession>Q9N6W3</accession>
<accession>Q9N6W4</accession>
<accession>Q9N6W5</accession>
<accession>Q9VDA9</accession>
<accession>Q9VDB2</accession>
<accession>Q9VDB3</accession>
<accession>Q9VDB4</accession>
<accession>Q9VDB5</accession>
<gene>
    <name evidence="32" type="primary">mod(mdg4)</name>
    <name type="synonym">bpd</name>
    <name evidence="32" type="synonym">doom</name>
    <name evidence="32" type="synonym">E(var)3-93D</name>
    <name evidence="32" type="ORF">CG32491</name>
</gene>
<comment type="function">
    <text evidence="3 5 8 10 11 15 18 19 20 21 22 23">Component of the gypsy chromatin insulator complex which is required for the function of the gypsy chromatin insulator and other endogenous chromatin insulators. Chromatin insulators are regulatory elements which establish independent domains of transcriptional activity within eukaryotic genomes. Insulators have two defining properties; they can block the communication between an enhancer and a promoter when placed between them and can also buffer transgenes from position effect variegation (PEV). Insulators are proposed to structure the chromatin fiber into independent domains of differing transcriptional potential by promoting the formation of distinct chromatin loops. This chromatin looping may involve the formation of insulator bodies, where homotypic interactions between individual subunits of the insulator complex could promote the clustering of widely spaced insulators at the nuclear periphery. Within the gypsy insulator complex, this protein may control the nature of the repressive effect of su(Hw): in the absence of mod(mdg4) protein, su(Hw) exerts a bidirectional silencing effect, whereas in the presence of mod(mdg4), the silencing effect is unidirectional. Isoform H is specifically required to maintain the pairing of achiasmate homologs in male meiosis I which is mediated by the rDNA repeats on the achiasmate X-Y bivalents. Isoform H also plays a role in apoptotic regulatory pathways.</text>
</comment>
<comment type="subunit">
    <text evidence="7 8 12 13 14 17 18">Can self-associate (PubMed:11350941, PubMed:11416154). Interacts with Chi (PubMed:11416154). Interacts with Top2 (PubMed:21304601). Isoform mod2.2: Component of the gypsy chromatin insulator complex, composed of Cp190, mod(mdg4) and su(Hw) (PubMed:11350941, PubMed:11416154, PubMed:15574329, PubMed:7664338). The gypsy chromatin insulator complex interacts with Topors via mod(mdg4) and su(Hw) (PubMed:16209949). Isoform mod2.2 interacts with Trl/GAGA and interaction with this protein may bypass the repressive effects of the su(Hw) insulator (PubMed:15465920).</text>
</comment>
<comment type="interaction">
    <interactant intactId="EBI-1433422">
        <id>Q86B87-1</id>
    </interactant>
    <interactant intactId="EBI-868840">
        <id>Q24478</id>
        <label>Cp190</label>
    </interactant>
    <organismsDiffer>false</organismsDiffer>
    <experiments>4</experiments>
</comment>
<comment type="interaction">
    <interactant intactId="EBI-15125980">
        <id>Q86B87-7</id>
    </interactant>
    <interactant intactId="EBI-15125978">
        <id>D6W4U4</id>
        <label>UbcD6-RA</label>
    </interactant>
    <organismsDiffer>false</organismsDiffer>
    <experiments>4</experiments>
</comment>
<comment type="subcellular location">
    <subcellularLocation>
        <location evidence="5 6 7 13 14 15 17 20 23">Nucleus</location>
    </subcellularLocation>
    <subcellularLocation>
        <location evidence="5 6 7 13 14 15 17 20 23">Chromosome</location>
    </subcellularLocation>
    <text evidence="6 7 13 14 15 23">Colocalizes with other elements of the gypsy chromatin insulator complex at multiple sites on polytene chromosomes and at nuclear insulator bodies (PubMed:11106742, PubMed:11350941, PubMed:15574329, PubMed:16209949, PubMed:9491892). The unique C-termini of individual isoforms may specify binding to particular chromosomal locations (PubMed:11350941). During the G2 phase of male meiosis isoform H localizes to the nucleolus (PubMed:16286005). It subsequently localizes to the rDNA repeats of the X-Y bivalent and to multiple autosomal loci, where it remains until anaphase I (PubMed:16286005). Localization to the rDNA repeats requires SA-2, while localization to autosomal loci requires SA-2 and tef (PubMed:16286005).</text>
</comment>
<comment type="alternative products">
    <event type="alternative splicing"/>
    <isoform>
        <id>Q86B87-1</id>
        <name>mod2.2</name>
        <name evidence="5">67.2</name>
        <name>E(VAR)3-93D</name>
        <sequence type="displayed"/>
    </isoform>
    <isoform>
        <id>Q86B87-16</id>
        <name evidence="5">53.1</name>
        <sequence type="described" ref="VSP_050724"/>
    </isoform>
    <isoform>
        <id>Q86B87-28</id>
        <name>53.6</name>
        <name>X</name>
        <sequence type="described" ref="VSP_010286"/>
    </isoform>
    <isoform>
        <id>Q86B87-23</id>
        <name>54.7</name>
        <name>Y</name>
        <sequence type="described" ref="VSP_010287"/>
    </isoform>
    <isoform>
        <id>Q86B87-13</id>
        <name evidence="5">55.6</name>
        <sequence type="described" ref="VSP_050725"/>
    </isoform>
    <isoform>
        <id>Q86B87-25</id>
        <name>59.0</name>
        <name>Z</name>
        <sequence type="described" ref="VSP_010288"/>
    </isoform>
    <isoform>
        <id>Q86B87-4</id>
        <name evidence="5">62.3</name>
        <sequence type="described" ref="VSP_050701"/>
    </isoform>
    <isoform>
        <id>Q86B87-17</id>
        <name evidence="9">A</name>
        <name evidence="9">54.2</name>
        <sequence type="described" ref="VSP_050713"/>
    </isoform>
    <isoform>
        <id>Q86B87-29</id>
        <name>AA</name>
        <sequence type="described" ref="VSP_034704"/>
    </isoform>
    <isoform>
        <id>Q86B87-30</id>
        <name>AC</name>
        <sequence type="described" ref="VSP_034706"/>
    </isoform>
    <isoform>
        <id>Q86B87-31</id>
        <name>AB</name>
        <sequence type="described" ref="VSP_034705"/>
    </isoform>
    <isoform>
        <id>Q86B87-27</id>
        <name>B</name>
        <name>54.6</name>
        <sequence type="described" ref="VSP_010284"/>
    </isoform>
    <isoform>
        <id>Q86B87-9</id>
        <name evidence="5 20">C</name>
        <name evidence="5">58.0</name>
        <name evidence="20">3</name>
        <sequence type="described" ref="VSP_050714"/>
    </isoform>
    <isoform>
        <id>Q86B87-24</id>
        <name>D</name>
        <name>57.4</name>
        <sequence type="described" ref="VSP_010285"/>
    </isoform>
    <isoform>
        <id>Q86B87-2</id>
        <name evidence="5">E</name>
        <name evidence="5">65.0</name>
        <sequence type="described" ref="VSP_050699"/>
    </isoform>
    <isoform>
        <id>Q86B87-8</id>
        <name evidence="5">F</name>
        <name evidence="5">58.6</name>
        <sequence type="described" ref="VSP_050704"/>
    </isoform>
    <isoform>
        <id>Q86B87-15</id>
        <name evidence="5">G</name>
        <name evidence="5">54.2</name>
        <sequence type="described" ref="VSP_050715"/>
    </isoform>
    <isoform>
        <id>Q86B87-10</id>
        <name evidence="5 22">H</name>
        <name evidence="5">56.3</name>
        <name>Doom</name>
        <name>MNM</name>
        <sequence type="described" ref="VSP_050716"/>
    </isoform>
    <isoform>
        <id>Q86B87-6</id>
        <name evidence="5">I</name>
        <name evidence="5">59.1</name>
        <sequence type="described" ref="VSP_050703"/>
    </isoform>
    <isoform>
        <id>Q86B87-19</id>
        <name evidence="5">J</name>
        <name evidence="5">51.4</name>
        <sequence type="described" ref="VSP_050717"/>
    </isoform>
    <isoform>
        <id>Q86B87-11</id>
        <name evidence="5">K</name>
        <name evidence="5">55.7</name>
        <sequence type="described" ref="VSP_050718"/>
    </isoform>
    <isoform>
        <id>Q86B87-18</id>
        <name evidence="9">L</name>
        <name evidence="9">52.2</name>
        <sequence type="described" ref="VSP_050719"/>
    </isoform>
    <isoform>
        <id>Q86B87-14</id>
        <name evidence="5">M</name>
        <name evidence="5">55.3</name>
        <sequence type="described" ref="VSP_050720"/>
    </isoform>
    <isoform>
        <id>Q86B87-3</id>
        <name evidence="5">N</name>
        <name evidence="5">64.2</name>
        <sequence type="described" ref="VSP_050700"/>
    </isoform>
    <isoform>
        <id>Q86B87-5</id>
        <name evidence="5">O</name>
        <name evidence="5">60.1</name>
        <sequence type="described" ref="VSP_050702"/>
    </isoform>
    <isoform>
        <id>Q86B87-7</id>
        <name evidence="24">P</name>
        <name>58.6</name>
        <sequence type="described" ref="VSP_050705"/>
    </isoform>
    <isoform>
        <id>Q86B87-21</id>
        <name evidence="5">Q</name>
        <name evidence="5">46.3</name>
        <sequence type="described" ref="VSP_050721"/>
    </isoform>
    <isoform>
        <id>Q86B87-20</id>
        <name evidence="5">R</name>
        <name evidence="5">52.0</name>
        <sequence type="described" ref="VSP_050722"/>
    </isoform>
    <isoform>
        <id>Q86B87-12</id>
        <name evidence="5">S</name>
        <name evidence="5">55.1</name>
        <sequence type="described" ref="VSP_050723"/>
    </isoform>
    <isoform>
        <id>Q86B87-26</id>
        <name>mod1.8</name>
        <sequence type="described" ref="VSP_010289"/>
    </isoform>
    <isoform>
        <id>Q86B87-22</id>
        <name>mod1.9</name>
        <sequence type="described" ref="VSP_010283"/>
    </isoform>
</comment>
<comment type="developmental stage">
    <text evidence="5">Expressed both maternally and zygotically. Zygotic expression is high in pupae and adult females but low in other stages of development.</text>
</comment>
<comment type="domain">
    <text>Homotypic interactions mediated by the BTB (POZ) domain of this protein may promote the clustering of distant insulator complexes into nuclear insulator bodies.</text>
</comment>
<comment type="miscellaneous">
    <molecule>Isoform mod2.2</molecule>
    <text>C-terminal exons are translated from the opposite DNA strand. This may be due to a trans-splicing event.</text>
</comment>
<comment type="miscellaneous">
    <molecule>Isoform 53.1</molecule>
    <text evidence="31">C-terminal exons are translated from the opposite DNA strand. This may be due to a trans-splicing event.</text>
</comment>
<comment type="miscellaneous">
    <molecule>Isoform 53.6</molecule>
    <text evidence="31">C-terminal exons are translated from the opposite DNA strand. This may be due to a trans-splicing event.</text>
</comment>
<comment type="miscellaneous">
    <molecule>Isoform 54.7</molecule>
    <text evidence="31">C-terminal exons are translated from the opposite DNA strand. This may be due to a trans-splicing event.</text>
</comment>
<comment type="miscellaneous">
    <molecule>Isoform 55.6</molecule>
    <text evidence="31">C-terminal exons are translated from the opposite DNA strand. This may be due to a trans-splicing event.</text>
</comment>
<comment type="miscellaneous">
    <molecule>Isoform 59.0</molecule>
    <text evidence="31">C-terminal exons are translated from the opposite DNA strand. This may be due to a trans-splicing event.</text>
</comment>
<comment type="miscellaneous">
    <molecule>Isoform 62.3</molecule>
    <text evidence="31">C-terminal exons are translated from the opposite DNA strand. This may be due to a trans-splicing event.</text>
</comment>
<comment type="sequence caution" evidence="31">
    <conflict type="miscellaneous discrepancy">
        <sequence resource="EMBL-CDS" id="AAA82990"/>
    </conflict>
    <text>Intron retention.</text>
</comment>
<comment type="sequence caution" evidence="31">
    <conflict type="miscellaneous discrepancy">
        <sequence resource="EMBL-CDS" id="AAL29128"/>
    </conflict>
    <text>Intron retention.</text>
</comment>
<comment type="sequence caution" evidence="31">
    <conflict type="erroneous initiation">
        <sequence resource="EMBL-CDS" id="AAN13870"/>
    </conflict>
</comment>
<reference evidence="31" key="1">
    <citation type="journal article" date="1993" name="Proc. Natl. Acad. Sci. U.S.A.">
        <title>The enhancer of position-effect variegation of Drosophila, E(var)3-93D, codes for a chromatin protein containing a conserved domain common to several transcriptional regulators.</title>
        <authorList>
            <person name="Dorn R."/>
            <person name="Krauss V."/>
            <person name="Reuter G."/>
            <person name="Saumweber H."/>
        </authorList>
    </citation>
    <scope>NUCLEOTIDE SEQUENCE [GENOMIC DNA / MRNA] (ISOFORMS C AND MOD2.2)</scope>
    <scope>FUNCTION</scope>
    <scope>SUBCELLULAR LOCATION</scope>
    <source>
        <strain evidence="20">Oregon-R</strain>
        <tissue evidence="20">Embryo</tissue>
    </source>
</reference>
<reference evidence="31" key="2">
    <citation type="journal article" date="1995" name="Cell">
        <title>A Drosophila protein that imparts directionality on a chromatin insulator is an enhancer of position-effect variegation.</title>
        <authorList>
            <person name="Gerasimova T.I."/>
            <person name="Gdula D.A."/>
            <person name="Gerasimov D.V."/>
            <person name="Simonova O."/>
            <person name="Corces V.G."/>
        </authorList>
    </citation>
    <scope>NUCLEOTIDE SEQUENCE [MRNA] (ISOFORMS MOD1.8; MOD1.9 AND MOD2.2)</scope>
    <scope>FUNCTION</scope>
    <scope>INTERACTION WITH SU(HW)</scope>
</reference>
<reference evidence="31" key="3">
    <citation type="journal article" date="1997" name="Mol. Cell. Biol.">
        <title>Doom, a product of the Drosophila mod(mdg4) gene, induces apoptosis and binds to baculovirus inhibitor-of-apoptosis proteins.</title>
        <authorList>
            <person name="Harvey A.J."/>
            <person name="Bidwai A.P."/>
            <person name="Miller L.K."/>
        </authorList>
    </citation>
    <scope>NUCLEOTIDE SEQUENCE [MRNA] (ISOFORM H)</scope>
    <scope>FUNCTION</scope>
    <source>
        <strain evidence="22">Canton-S</strain>
    </source>
</reference>
<reference evidence="31" key="4">
    <citation type="journal article" date="2000" name="Genetics">
        <title>Genetic and molecular complexity of the position effect variegation modifier mod(mdg4) in Drosophila.</title>
        <authorList>
            <person name="Buechner K."/>
            <person name="Roth P."/>
            <person name="Schotta G."/>
            <person name="Krauss V."/>
            <person name="Saumweber H."/>
            <person name="Reuter G."/>
            <person name="Dorn R."/>
        </authorList>
    </citation>
    <scope>NUCLEOTIDE SEQUENCE [MRNA] (ISOFORMS 53.1; 53.6; 55.6; 59.0; 62.3; B; C; D; E; F; G; H; I; J; K; M; N; O; Q; R AND S)</scope>
    <scope>FUNCTION</scope>
    <scope>SUBCELLULAR LOCATION</scope>
    <scope>DEVELOPMENTAL STAGE</scope>
</reference>
<reference evidence="31" key="5">
    <citation type="journal article" date="2001" name="Proc. Natl. Acad. Sci. U.S.A.">
        <title>Transgene analysis proves mRNA trans-splicing at the complex mod(mdg4) locus in Drosophila.</title>
        <authorList>
            <person name="Dorn R."/>
            <person name="Reuter G."/>
            <person name="Loewendorf A."/>
        </authorList>
    </citation>
    <scope>NUCLEOTIDE SEQUENCE [MRNA] (ISOFORMS A; L; P; 53.6 AND 54.7)</scope>
</reference>
<reference evidence="31" key="6">
    <citation type="journal article" date="2000" name="Science">
        <title>The genome sequence of Drosophila melanogaster.</title>
        <authorList>
            <person name="Adams M.D."/>
            <person name="Celniker S.E."/>
            <person name="Holt R.A."/>
            <person name="Evans C.A."/>
            <person name="Gocayne J.D."/>
            <person name="Amanatides P.G."/>
            <person name="Scherer S.E."/>
            <person name="Li P.W."/>
            <person name="Hoskins R.A."/>
            <person name="Galle R.F."/>
            <person name="George R.A."/>
            <person name="Lewis S.E."/>
            <person name="Richards S."/>
            <person name="Ashburner M."/>
            <person name="Henderson S.N."/>
            <person name="Sutton G.G."/>
            <person name="Wortman J.R."/>
            <person name="Yandell M.D."/>
            <person name="Zhang Q."/>
            <person name="Chen L.X."/>
            <person name="Brandon R.C."/>
            <person name="Rogers Y.-H.C."/>
            <person name="Blazej R.G."/>
            <person name="Champe M."/>
            <person name="Pfeiffer B.D."/>
            <person name="Wan K.H."/>
            <person name="Doyle C."/>
            <person name="Baxter E.G."/>
            <person name="Helt G."/>
            <person name="Nelson C.R."/>
            <person name="Miklos G.L.G."/>
            <person name="Abril J.F."/>
            <person name="Agbayani A."/>
            <person name="An H.-J."/>
            <person name="Andrews-Pfannkoch C."/>
            <person name="Baldwin D."/>
            <person name="Ballew R.M."/>
            <person name="Basu A."/>
            <person name="Baxendale J."/>
            <person name="Bayraktaroglu L."/>
            <person name="Beasley E.M."/>
            <person name="Beeson K.Y."/>
            <person name="Benos P.V."/>
            <person name="Berman B.P."/>
            <person name="Bhandari D."/>
            <person name="Bolshakov S."/>
            <person name="Borkova D."/>
            <person name="Botchan M.R."/>
            <person name="Bouck J."/>
            <person name="Brokstein P."/>
            <person name="Brottier P."/>
            <person name="Burtis K.C."/>
            <person name="Busam D.A."/>
            <person name="Butler H."/>
            <person name="Cadieu E."/>
            <person name="Center A."/>
            <person name="Chandra I."/>
            <person name="Cherry J.M."/>
            <person name="Cawley S."/>
            <person name="Dahlke C."/>
            <person name="Davenport L.B."/>
            <person name="Davies P."/>
            <person name="de Pablos B."/>
            <person name="Delcher A."/>
            <person name="Deng Z."/>
            <person name="Mays A.D."/>
            <person name="Dew I."/>
            <person name="Dietz S.M."/>
            <person name="Dodson K."/>
            <person name="Doup L.E."/>
            <person name="Downes M."/>
            <person name="Dugan-Rocha S."/>
            <person name="Dunkov B.C."/>
            <person name="Dunn P."/>
            <person name="Durbin K.J."/>
            <person name="Evangelista C.C."/>
            <person name="Ferraz C."/>
            <person name="Ferriera S."/>
            <person name="Fleischmann W."/>
            <person name="Fosler C."/>
            <person name="Gabrielian A.E."/>
            <person name="Garg N.S."/>
            <person name="Gelbart W.M."/>
            <person name="Glasser K."/>
            <person name="Glodek A."/>
            <person name="Gong F."/>
            <person name="Gorrell J.H."/>
            <person name="Gu Z."/>
            <person name="Guan P."/>
            <person name="Harris M."/>
            <person name="Harris N.L."/>
            <person name="Harvey D.A."/>
            <person name="Heiman T.J."/>
            <person name="Hernandez J.R."/>
            <person name="Houck J."/>
            <person name="Hostin D."/>
            <person name="Houston K.A."/>
            <person name="Howland T.J."/>
            <person name="Wei M.-H."/>
            <person name="Ibegwam C."/>
            <person name="Jalali M."/>
            <person name="Kalush F."/>
            <person name="Karpen G.H."/>
            <person name="Ke Z."/>
            <person name="Kennison J.A."/>
            <person name="Ketchum K.A."/>
            <person name="Kimmel B.E."/>
            <person name="Kodira C.D."/>
            <person name="Kraft C.L."/>
            <person name="Kravitz S."/>
            <person name="Kulp D."/>
            <person name="Lai Z."/>
            <person name="Lasko P."/>
            <person name="Lei Y."/>
            <person name="Levitsky A.A."/>
            <person name="Li J.H."/>
            <person name="Li Z."/>
            <person name="Liang Y."/>
            <person name="Lin X."/>
            <person name="Liu X."/>
            <person name="Mattei B."/>
            <person name="McIntosh T.C."/>
            <person name="McLeod M.P."/>
            <person name="McPherson D."/>
            <person name="Merkulov G."/>
            <person name="Milshina N.V."/>
            <person name="Mobarry C."/>
            <person name="Morris J."/>
            <person name="Moshrefi A."/>
            <person name="Mount S.M."/>
            <person name="Moy M."/>
            <person name="Murphy B."/>
            <person name="Murphy L."/>
            <person name="Muzny D.M."/>
            <person name="Nelson D.L."/>
            <person name="Nelson D.R."/>
            <person name="Nelson K.A."/>
            <person name="Nixon K."/>
            <person name="Nusskern D.R."/>
            <person name="Pacleb J.M."/>
            <person name="Palazzolo M."/>
            <person name="Pittman G.S."/>
            <person name="Pan S."/>
            <person name="Pollard J."/>
            <person name="Puri V."/>
            <person name="Reese M.G."/>
            <person name="Reinert K."/>
            <person name="Remington K."/>
            <person name="Saunders R.D.C."/>
            <person name="Scheeler F."/>
            <person name="Shen H."/>
            <person name="Shue B.C."/>
            <person name="Siden-Kiamos I."/>
            <person name="Simpson M."/>
            <person name="Skupski M.P."/>
            <person name="Smith T.J."/>
            <person name="Spier E."/>
            <person name="Spradling A.C."/>
            <person name="Stapleton M."/>
            <person name="Strong R."/>
            <person name="Sun E."/>
            <person name="Svirskas R."/>
            <person name="Tector C."/>
            <person name="Turner R."/>
            <person name="Venter E."/>
            <person name="Wang A.H."/>
            <person name="Wang X."/>
            <person name="Wang Z.-Y."/>
            <person name="Wassarman D.A."/>
            <person name="Weinstock G.M."/>
            <person name="Weissenbach J."/>
            <person name="Williams S.M."/>
            <person name="Woodage T."/>
            <person name="Worley K.C."/>
            <person name="Wu D."/>
            <person name="Yang S."/>
            <person name="Yao Q.A."/>
            <person name="Ye J."/>
            <person name="Yeh R.-F."/>
            <person name="Zaveri J.S."/>
            <person name="Zhan M."/>
            <person name="Zhang G."/>
            <person name="Zhao Q."/>
            <person name="Zheng L."/>
            <person name="Zheng X.H."/>
            <person name="Zhong F.N."/>
            <person name="Zhong W."/>
            <person name="Zhou X."/>
            <person name="Zhu S.C."/>
            <person name="Zhu X."/>
            <person name="Smith H.O."/>
            <person name="Gibbs R.A."/>
            <person name="Myers E.W."/>
            <person name="Rubin G.M."/>
            <person name="Venter J.C."/>
        </authorList>
    </citation>
    <scope>NUCLEOTIDE SEQUENCE [LARGE SCALE GENOMIC DNA]</scope>
    <source>
        <strain evidence="4">Berkeley</strain>
    </source>
</reference>
<reference evidence="31" key="7">
    <citation type="journal article" date="2002" name="Genome Biol.">
        <title>Annotation of the Drosophila melanogaster euchromatic genome: a systematic review.</title>
        <authorList>
            <person name="Misra S."/>
            <person name="Crosby M.A."/>
            <person name="Mungall C.J."/>
            <person name="Matthews B.B."/>
            <person name="Campbell K.S."/>
            <person name="Hradecky P."/>
            <person name="Huang Y."/>
            <person name="Kaminker J.S."/>
            <person name="Millburn G.H."/>
            <person name="Prochnik S.E."/>
            <person name="Smith C.D."/>
            <person name="Tupy J.L."/>
            <person name="Whitfield E.J."/>
            <person name="Bayraktaroglu L."/>
            <person name="Berman B.P."/>
            <person name="Bettencourt B.R."/>
            <person name="Celniker S.E."/>
            <person name="de Grey A.D.N.J."/>
            <person name="Drysdale R.A."/>
            <person name="Harris N.L."/>
            <person name="Richter J."/>
            <person name="Russo S."/>
            <person name="Schroeder A.J."/>
            <person name="Shu S.Q."/>
            <person name="Stapleton M."/>
            <person name="Yamada C."/>
            <person name="Ashburner M."/>
            <person name="Gelbart W.M."/>
            <person name="Rubin G.M."/>
            <person name="Lewis S.E."/>
        </authorList>
    </citation>
    <scope>GENOME REANNOTATION</scope>
    <scope>ALTERNATIVE SPLICING</scope>
    <source>
        <strain>Berkeley</strain>
    </source>
</reference>
<reference evidence="31" key="8">
    <citation type="submission" date="2006-12" db="EMBL/GenBank/DDBJ databases">
        <authorList>
            <person name="Stapleton M."/>
            <person name="Brokstein P."/>
            <person name="Hong L."/>
            <person name="Agbayani A."/>
            <person name="Carlson J.W."/>
            <person name="Champe M."/>
            <person name="Chavez C."/>
            <person name="Dorsett V."/>
            <person name="Dresnek D."/>
            <person name="Farfan D."/>
            <person name="Frise E."/>
            <person name="George R.A."/>
            <person name="Gonzalez M."/>
            <person name="Guarin H."/>
            <person name="Kapadia B."/>
            <person name="Kronmiller B."/>
            <person name="Li P.W."/>
            <person name="Liao G."/>
            <person name="Miranda A."/>
            <person name="Mungall C.J."/>
            <person name="Nunoo J."/>
            <person name="Pacleb J.M."/>
            <person name="Paragas V."/>
            <person name="Park S."/>
            <person name="Patel S."/>
            <person name="Phouanenavong S."/>
            <person name="Wan K.H."/>
            <person name="Yu C."/>
            <person name="Lewis S.E."/>
            <person name="Rubin G.M."/>
            <person name="Celniker S.E."/>
        </authorList>
    </citation>
    <scope>NUCLEOTIDE SEQUENCE [LARGE SCALE MRNA] (ISOFORMS 55.6; AA; E AND P)</scope>
    <source>
        <strain evidence="31">Berkeley</strain>
        <tissue evidence="31">Embryo</tissue>
    </source>
</reference>
<reference key="9">
    <citation type="journal article" date="2001" name="Mol. Cell. Biol.">
        <title>The gypsy insulator can act as a promoter-specific transcriptional stimulator.</title>
        <authorList>
            <person name="Wei W."/>
            <person name="Brennan M.D."/>
        </authorList>
    </citation>
    <scope>NUCLEOTIDE SEQUENCE [GENOMIC DNA] OF 458-610 (ISOFORM MOD2.2)</scope>
    <scope>FUNCTION</scope>
    <source>
        <strain>Oregon-R</strain>
    </source>
</reference>
<reference key="10">
    <citation type="journal article" date="1995" name="Proc. Natl. Acad. Sci. U.S.A.">
        <title>The su(Hw) protein bound to gypsy sequences in one chromosome can repress enhancer-promoter interactions in the paired gene located in the other homolog.</title>
        <authorList>
            <person name="Georgiev P.G."/>
            <person name="Corces V.G."/>
        </authorList>
    </citation>
    <scope>FUNCTION</scope>
</reference>
<reference key="11">
    <citation type="journal article" date="1996" name="Genetics">
        <title>Interaction between mutations in the suppressor of Hairy wing and modifier of mdg4 genes of Drosophila melanogaster affecting the phenotype of gypsy-induced mutations.</title>
        <authorList>
            <person name="Georgiev P.G."/>
            <person name="Kozycina M."/>
        </authorList>
    </citation>
    <scope>FUNCTION</scope>
</reference>
<reference key="12">
    <citation type="journal article" date="1998" name="Cell">
        <title>Polycomb and trithorax group proteins mediate the function of a chromatin insulator.</title>
        <authorList>
            <person name="Gerasimova T.I."/>
            <person name="Corces V.G."/>
        </authorList>
    </citation>
    <scope>FUNCTION</scope>
    <scope>SUBCELLULAR LOCATION</scope>
</reference>
<reference key="13">
    <citation type="journal article" date="1999" name="J. Neurobiol.">
        <title>The gene mod(mdg4) affects synapse specificity and structure in Drosophila.</title>
        <authorList>
            <person name="Gorczyca M."/>
            <person name="Popova E."/>
            <person name="Jia X.-X."/>
            <person name="Budnik V."/>
        </authorList>
    </citation>
    <scope>FUNCTION</scope>
</reference>
<reference key="14">
    <citation type="journal article" date="2000" name="Mol. Cell">
        <title>A chromatin insulator determines the nuclear localization of DNA.</title>
        <authorList>
            <person name="Gerasimova T.I."/>
            <person name="Byrd K."/>
            <person name="Corces V.G."/>
        </authorList>
    </citation>
    <scope>SUBCELLULAR LOCATION</scope>
</reference>
<reference key="15">
    <citation type="journal article" date="2000" name="Nucleic Acids Res.">
        <title>Functional studies of the BTB domain in the Drosophila GAGA and Mod(mdg4) proteins.</title>
        <authorList>
            <person name="Read D."/>
            <person name="Butte M.J."/>
            <person name="Dernburg A.F."/>
            <person name="Frasch M."/>
            <person name="Kornberg T.B."/>
        </authorList>
    </citation>
    <scope>CHARACTERIZATION OF MUTANT MOD(MDG4)351</scope>
</reference>
<reference key="16">
    <citation type="journal article" date="2001" name="EMBO J.">
        <title>Interactions between the Su(Hw) and Mod(mdg4) proteins required for gypsy insulator function.</title>
        <authorList>
            <person name="Ghosh D."/>
            <person name="Gerasimova T.I."/>
            <person name="Corces V.G."/>
        </authorList>
    </citation>
    <scope>SELF-ASSOCIATION</scope>
    <scope>INTERACTION WITH SU(HW)</scope>
    <scope>SUBCELLULAR LOCATION</scope>
</reference>
<reference key="17">
    <citation type="journal article" date="2001" name="Genetics">
        <title>The gypsy insulator of Drosophila affects chromatin structure in a directional manner.</title>
        <authorList>
            <person name="Chen S."/>
            <person name="Corces V.G."/>
        </authorList>
    </citation>
    <scope>FUNCTION</scope>
</reference>
<reference key="18">
    <citation type="journal article" date="2001" name="Mol. Cell. Biol.">
        <title>Insulation of enhancer-promoter communication by a gypsy transposon insert in the Drosophila cut gene: cooperation between suppressor of hairy-wing and modifier of mdg4 proteins.</title>
        <authorList>
            <person name="Gause M."/>
            <person name="Morcillo P."/>
            <person name="Dorsett D."/>
        </authorList>
    </citation>
    <scope>FUNCTION</scope>
    <scope>SELF-ASSOCIATION</scope>
    <scope>INTERACTION WITH CHI AND SU(HW)</scope>
</reference>
<reference key="19">
    <citation type="journal article" date="2004" name="Mol. Cell">
        <title>The centrosomal protein CP190 is a component of the gypsy chromatin insulator.</title>
        <authorList>
            <person name="Pai C.-Y."/>
            <person name="Lei E.P."/>
            <person name="Ghosh D."/>
            <person name="Corces V.G."/>
        </authorList>
    </citation>
    <scope>INTERACTION WITH CP190; SU(HW) AND TRL</scope>
    <scope>SUBCELLULAR LOCATION</scope>
</reference>
<reference key="20">
    <citation type="journal article" date="2004" name="Proc. Natl. Acad. Sci. U.S.A.">
        <title>Interaction between the GAGA factor and Mod(mdg4) proteins promotes insulator bypass in Drosophila.</title>
        <authorList>
            <person name="Melnikova L."/>
            <person name="Juge F."/>
            <person name="Gruzdeva N."/>
            <person name="Mazur A."/>
            <person name="Cavalli G."/>
            <person name="Georgiev P.G."/>
        </authorList>
    </citation>
    <scope>INTERACTION WITH TRL</scope>
</reference>
<reference key="21">
    <citation type="journal article" date="2005" name="Cell">
        <title>Identification of two proteins required for conjunction and regular segregation of achiasmate homologs in Drosophila male meiosis.</title>
        <authorList>
            <person name="Thomas S.E."/>
            <person name="Soltani-Bejnood M."/>
            <person name="Roth P."/>
            <person name="Dorn R."/>
            <person name="Logsdon J.M. Jr."/>
            <person name="McKee B.D."/>
        </authorList>
    </citation>
    <scope>FUNCTION</scope>
    <scope>SUBCELLULAR LOCATION</scope>
</reference>
<reference key="22">
    <citation type="journal article" date="2005" name="Mol. Cell">
        <title>The ubiquitin ligase dTopors directs the nuclear organization of a chromatin insulator.</title>
        <authorList>
            <person name="Capelson M."/>
            <person name="Corces V.G."/>
        </authorList>
    </citation>
    <scope>INTERACTION WITH TOPORS</scope>
    <scope>SUBCELLULAR LOCATION</scope>
</reference>
<reference key="23">
    <citation type="journal article" date="2008" name="J. Proteome Res.">
        <title>Phosphoproteome analysis of Drosophila melanogaster embryos.</title>
        <authorList>
            <person name="Zhai B."/>
            <person name="Villen J."/>
            <person name="Beausoleil S.A."/>
            <person name="Mintseris J."/>
            <person name="Gygi S.P."/>
        </authorList>
    </citation>
    <scope>PHOSPHORYLATION [LARGE SCALE ANALYSIS] AT SER-230</scope>
    <scope>IDENTIFICATION BY MASS SPECTROMETRY</scope>
    <source>
        <tissue>Embryo</tissue>
    </source>
</reference>
<reference key="24">
    <citation type="journal article" date="2011" name="PLoS ONE">
        <title>DNA topoisomerase II modulates insulator function in Drosophila.</title>
        <authorList>
            <person name="Ramos E."/>
            <person name="Torre E.A."/>
            <person name="Bushey A.M."/>
            <person name="Gurudatta B.V."/>
            <person name="Corces V.G."/>
        </authorList>
    </citation>
    <scope>INTERACTION WITH TOP2</scope>
    <scope>SUBCELLULAR LOCATION</scope>
</reference>
<sequence length="610" mass="67171">MADDEQFSLCWNNFNTNLSAGFHESLCRGDLVDVSLAAEGQIVKAHRLVLSVCSPFFRKMFTQMPSNTHAIVFLNNVSHSALKDLIQFMYCGEVNVKQDALPAFISTAESLQIKGLTDNDPAPQPPQESSPPPAAPHVQQQQIPAQRVQRQQPRASARYKIETVDDGLGDEKQSTTQIVIQTTAAPQATIVQQQQPQQAAQQIQSQQLQTGTTTTATLVSTNKRSAQRSSLTPASSSAGVKRSKTSTSANVMDPLDSTTETGATTTAQLVPQQITVQTSVVSAAEAKLHQQSPQQVRQEEAEYIDLPMELPTKSEPDYSEDHGDAAGDAEGTYVEDDTYGDMRYDDSYFTENEDAGNQTAANTSGGGVTATTSKAVVKQQSQNYSESSFVDTSGDQGNTEAQAATSASATKIPPRKRGRPKTKVEDQTPKPKLLEKLQAATLNEEASEPAVYASTTKGGVKLIFNGHLFKFSFRKADYSVFQCCYREHGEECKVRVVCDQKRVFPYEGEHVHFMQASDKSCLPSQFMPGESGVISSLSPSKELLMKNTTKLEEADDKEDEDFEEFEIQEIDEIELDEPEKTPAKEEEVDPNDFREKIKRRLQKALQNKKK</sequence>